<protein>
    <recommendedName>
        <fullName>Adenomatous polyposis coli protein</fullName>
        <shortName>Protein APC</shortName>
    </recommendedName>
    <alternativeName>
        <fullName>Deleted in polyposis 2.5</fullName>
    </alternativeName>
</protein>
<reference key="1">
    <citation type="journal article" date="1991" name="Cell">
        <title>Identification of deletion mutations and three new genes at the familial polyposis locus.</title>
        <authorList>
            <person name="Joslyn G."/>
            <person name="Carlson M."/>
            <person name="Thliveris A."/>
            <person name="Albertsen H."/>
            <person name="Gelbert L."/>
            <person name="Samowitz W."/>
            <person name="Groden J."/>
            <person name="Stevens J."/>
            <person name="Spirio L."/>
            <person name="Robertson M."/>
            <person name="Sargeant L."/>
            <person name="Krapcho K."/>
            <person name="Wolff E."/>
            <person name="Burt R."/>
            <person name="Hughes J.P."/>
            <person name="Warrington J."/>
            <person name="McPherson J.D."/>
            <person name="Wasmuth J.J."/>
            <person name="le Paslier D."/>
            <person name="Abderrahim H."/>
            <person name="Cohen D."/>
            <person name="Leppert M."/>
            <person name="White R."/>
        </authorList>
    </citation>
    <scope>NUCLEOTIDE SEQUENCE [MRNA] (ISOFORMS 1A AND 2)</scope>
    <scope>VARIANT ASP-1822</scope>
    <source>
        <tissue>Fetal brain</tissue>
    </source>
</reference>
<reference key="2">
    <citation type="journal article" date="1991" name="Science">
        <title>Identification of FAP locus genes from chromosome 5q21.</title>
        <authorList>
            <person name="Kinzler K.W."/>
            <person name="Nilbert M.C."/>
            <person name="Su L.-K."/>
            <person name="Vogelstein B."/>
            <person name="Bryan T.M."/>
            <person name="Levy D.B."/>
            <person name="Smith K.J."/>
            <person name="Preisinger A.C."/>
            <person name="Hedge P."/>
            <person name="McKechnie D."/>
            <person name="Finniear R."/>
            <person name="Markham A."/>
            <person name="Groffen J."/>
            <person name="Boguski M.S."/>
            <person name="Altschul S.F."/>
            <person name="Horii A.K."/>
            <person name="Ando H."/>
            <person name="Miyoshi Y."/>
            <person name="Miki Y."/>
            <person name="Nishisho I."/>
            <person name="Nakamura Y."/>
        </authorList>
    </citation>
    <scope>NUCLEOTIDE SEQUENCE [MRNA] (ISOFORM 1A)</scope>
    <scope>VARIANT ASP-1822</scope>
</reference>
<reference key="3">
    <citation type="journal article" date="2000" name="Science">
        <title>Asef, a link between the tumor suppressor APC and G-protein signaling.</title>
        <authorList>
            <person name="Kawasaki Y."/>
            <person name="Senda T."/>
            <person name="Ishidate T."/>
            <person name="Koyama R."/>
            <person name="Morishita T."/>
            <person name="Iwayama Y."/>
            <person name="Higuchi O."/>
            <person name="Akiyama T."/>
        </authorList>
    </citation>
    <scope>NUCLEOTIDE SEQUENCE [MRNA] (ISOFORM 1A)</scope>
    <scope>FUNCTION</scope>
    <scope>SUBCELLULAR LOCATION</scope>
    <scope>INTERACTION WITH ARHGEF4</scope>
    <scope>IDENTIFICATION IN A COMPLEX WITH ARHGEF4 AND CTNNB1</scope>
</reference>
<reference key="4">
    <citation type="journal article" date="2004" name="Nature">
        <title>The DNA sequence and comparative analysis of human chromosome 5.</title>
        <authorList>
            <person name="Schmutz J."/>
            <person name="Martin J."/>
            <person name="Terry A."/>
            <person name="Couronne O."/>
            <person name="Grimwood J."/>
            <person name="Lowry S."/>
            <person name="Gordon L.A."/>
            <person name="Scott D."/>
            <person name="Xie G."/>
            <person name="Huang W."/>
            <person name="Hellsten U."/>
            <person name="Tran-Gyamfi M."/>
            <person name="She X."/>
            <person name="Prabhakar S."/>
            <person name="Aerts A."/>
            <person name="Altherr M."/>
            <person name="Bajorek E."/>
            <person name="Black S."/>
            <person name="Branscomb E."/>
            <person name="Caoile C."/>
            <person name="Challacombe J.F."/>
            <person name="Chan Y.M."/>
            <person name="Denys M."/>
            <person name="Detter J.C."/>
            <person name="Escobar J."/>
            <person name="Flowers D."/>
            <person name="Fotopulos D."/>
            <person name="Glavina T."/>
            <person name="Gomez M."/>
            <person name="Gonzales E."/>
            <person name="Goodstein D."/>
            <person name="Grigoriev I."/>
            <person name="Groza M."/>
            <person name="Hammon N."/>
            <person name="Hawkins T."/>
            <person name="Haydu L."/>
            <person name="Israni S."/>
            <person name="Jett J."/>
            <person name="Kadner K."/>
            <person name="Kimball H."/>
            <person name="Kobayashi A."/>
            <person name="Lopez F."/>
            <person name="Lou Y."/>
            <person name="Martinez D."/>
            <person name="Medina C."/>
            <person name="Morgan J."/>
            <person name="Nandkeshwar R."/>
            <person name="Noonan J.P."/>
            <person name="Pitluck S."/>
            <person name="Pollard M."/>
            <person name="Predki P."/>
            <person name="Priest J."/>
            <person name="Ramirez L."/>
            <person name="Retterer J."/>
            <person name="Rodriguez A."/>
            <person name="Rogers S."/>
            <person name="Salamov A."/>
            <person name="Salazar A."/>
            <person name="Thayer N."/>
            <person name="Tice H."/>
            <person name="Tsai M."/>
            <person name="Ustaszewska A."/>
            <person name="Vo N."/>
            <person name="Wheeler J."/>
            <person name="Wu K."/>
            <person name="Yang J."/>
            <person name="Dickson M."/>
            <person name="Cheng J.-F."/>
            <person name="Eichler E.E."/>
            <person name="Olsen A."/>
            <person name="Pennacchio L.A."/>
            <person name="Rokhsar D.S."/>
            <person name="Richardson P."/>
            <person name="Lucas S.M."/>
            <person name="Myers R.M."/>
            <person name="Rubin E.M."/>
        </authorList>
    </citation>
    <scope>NUCLEOTIDE SEQUENCE [LARGE SCALE GENOMIC DNA]</scope>
</reference>
<reference key="5">
    <citation type="submission" date="2005-09" db="EMBL/GenBank/DDBJ databases">
        <authorList>
            <person name="Mural R.J."/>
            <person name="Istrail S."/>
            <person name="Sutton G.G."/>
            <person name="Florea L."/>
            <person name="Halpern A.L."/>
            <person name="Mobarry C.M."/>
            <person name="Lippert R."/>
            <person name="Walenz B."/>
            <person name="Shatkay H."/>
            <person name="Dew I."/>
            <person name="Miller J.R."/>
            <person name="Flanigan M.J."/>
            <person name="Edwards N.J."/>
            <person name="Bolanos R."/>
            <person name="Fasulo D."/>
            <person name="Halldorsson B.V."/>
            <person name="Hannenhalli S."/>
            <person name="Turner R."/>
            <person name="Yooseph S."/>
            <person name="Lu F."/>
            <person name="Nusskern D.R."/>
            <person name="Shue B.C."/>
            <person name="Zheng X.H."/>
            <person name="Zhong F."/>
            <person name="Delcher A.L."/>
            <person name="Huson D.H."/>
            <person name="Kravitz S.A."/>
            <person name="Mouchard L."/>
            <person name="Reinert K."/>
            <person name="Remington K.A."/>
            <person name="Clark A.G."/>
            <person name="Waterman M.S."/>
            <person name="Eichler E.E."/>
            <person name="Adams M.D."/>
            <person name="Hunkapiller M.W."/>
            <person name="Myers E.W."/>
            <person name="Venter J.C."/>
        </authorList>
    </citation>
    <scope>NUCLEOTIDE SEQUENCE [LARGE SCALE GENOMIC DNA]</scope>
    <scope>VARIANT ASP-1822</scope>
</reference>
<reference key="6">
    <citation type="journal article" date="2004" name="Nat. Genet.">
        <title>Complete sequencing and characterization of 21,243 full-length human cDNAs.</title>
        <authorList>
            <person name="Ota T."/>
            <person name="Suzuki Y."/>
            <person name="Nishikawa T."/>
            <person name="Otsuki T."/>
            <person name="Sugiyama T."/>
            <person name="Irie R."/>
            <person name="Wakamatsu A."/>
            <person name="Hayashi K."/>
            <person name="Sato H."/>
            <person name="Nagai K."/>
            <person name="Kimura K."/>
            <person name="Makita H."/>
            <person name="Sekine M."/>
            <person name="Obayashi M."/>
            <person name="Nishi T."/>
            <person name="Shibahara T."/>
            <person name="Tanaka T."/>
            <person name="Ishii S."/>
            <person name="Yamamoto J."/>
            <person name="Saito K."/>
            <person name="Kawai Y."/>
            <person name="Isono Y."/>
            <person name="Nakamura Y."/>
            <person name="Nagahari K."/>
            <person name="Murakami K."/>
            <person name="Yasuda T."/>
            <person name="Iwayanagi T."/>
            <person name="Wagatsuma M."/>
            <person name="Shiratori A."/>
            <person name="Sudo H."/>
            <person name="Hosoiri T."/>
            <person name="Kaku Y."/>
            <person name="Kodaira H."/>
            <person name="Kondo H."/>
            <person name="Sugawara M."/>
            <person name="Takahashi M."/>
            <person name="Kanda K."/>
            <person name="Yokoi T."/>
            <person name="Furuya T."/>
            <person name="Kikkawa E."/>
            <person name="Omura Y."/>
            <person name="Abe K."/>
            <person name="Kamihara K."/>
            <person name="Katsuta N."/>
            <person name="Sato K."/>
            <person name="Tanikawa M."/>
            <person name="Yamazaki M."/>
            <person name="Ninomiya K."/>
            <person name="Ishibashi T."/>
            <person name="Yamashita H."/>
            <person name="Murakawa K."/>
            <person name="Fujimori K."/>
            <person name="Tanai H."/>
            <person name="Kimata M."/>
            <person name="Watanabe M."/>
            <person name="Hiraoka S."/>
            <person name="Chiba Y."/>
            <person name="Ishida S."/>
            <person name="Ono Y."/>
            <person name="Takiguchi S."/>
            <person name="Watanabe S."/>
            <person name="Yosida M."/>
            <person name="Hotuta T."/>
            <person name="Kusano J."/>
            <person name="Kanehori K."/>
            <person name="Takahashi-Fujii A."/>
            <person name="Hara H."/>
            <person name="Tanase T.-O."/>
            <person name="Nomura Y."/>
            <person name="Togiya S."/>
            <person name="Komai F."/>
            <person name="Hara R."/>
            <person name="Takeuchi K."/>
            <person name="Arita M."/>
            <person name="Imose N."/>
            <person name="Musashino K."/>
            <person name="Yuuki H."/>
            <person name="Oshima A."/>
            <person name="Sasaki N."/>
            <person name="Aotsuka S."/>
            <person name="Yoshikawa Y."/>
            <person name="Matsunawa H."/>
            <person name="Ichihara T."/>
            <person name="Shiohata N."/>
            <person name="Sano S."/>
            <person name="Moriya S."/>
            <person name="Momiyama H."/>
            <person name="Satoh N."/>
            <person name="Takami S."/>
            <person name="Terashima Y."/>
            <person name="Suzuki O."/>
            <person name="Nakagawa S."/>
            <person name="Senoh A."/>
            <person name="Mizoguchi H."/>
            <person name="Goto Y."/>
            <person name="Shimizu F."/>
            <person name="Wakebe H."/>
            <person name="Hishigaki H."/>
            <person name="Watanabe T."/>
            <person name="Sugiyama A."/>
            <person name="Takemoto M."/>
            <person name="Kawakami B."/>
            <person name="Yamazaki M."/>
            <person name="Watanabe K."/>
            <person name="Kumagai A."/>
            <person name="Itakura S."/>
            <person name="Fukuzumi Y."/>
            <person name="Fujimori Y."/>
            <person name="Komiyama M."/>
            <person name="Tashiro H."/>
            <person name="Tanigami A."/>
            <person name="Fujiwara T."/>
            <person name="Ono T."/>
            <person name="Yamada K."/>
            <person name="Fujii Y."/>
            <person name="Ozaki K."/>
            <person name="Hirao M."/>
            <person name="Ohmori Y."/>
            <person name="Kawabata A."/>
            <person name="Hikiji T."/>
            <person name="Kobatake N."/>
            <person name="Inagaki H."/>
            <person name="Ikema Y."/>
            <person name="Okamoto S."/>
            <person name="Okitani R."/>
            <person name="Kawakami T."/>
            <person name="Noguchi S."/>
            <person name="Itoh T."/>
            <person name="Shigeta K."/>
            <person name="Senba T."/>
            <person name="Matsumura K."/>
            <person name="Nakajima Y."/>
            <person name="Mizuno T."/>
            <person name="Morinaga M."/>
            <person name="Sasaki M."/>
            <person name="Togashi T."/>
            <person name="Oyama M."/>
            <person name="Hata H."/>
            <person name="Watanabe M."/>
            <person name="Komatsu T."/>
            <person name="Mizushima-Sugano J."/>
            <person name="Satoh T."/>
            <person name="Shirai Y."/>
            <person name="Takahashi Y."/>
            <person name="Nakagawa K."/>
            <person name="Okumura K."/>
            <person name="Nagase T."/>
            <person name="Nomura N."/>
            <person name="Kikuchi H."/>
            <person name="Masuho Y."/>
            <person name="Yamashita R."/>
            <person name="Nakai K."/>
            <person name="Yada T."/>
            <person name="Nakamura Y."/>
            <person name="Ohara O."/>
            <person name="Isogai T."/>
            <person name="Sugano S."/>
        </authorList>
    </citation>
    <scope>NUCLEOTIDE SEQUENCE [LARGE SCALE MRNA] OF 1-1135 (ISOFORM 1B)</scope>
    <source>
        <tissue evidence="63">Amygdala</tissue>
    </source>
</reference>
<reference key="7">
    <citation type="journal article" date="1992" name="Cancer Res.">
        <title>Disruption of the APC gene by a retrotransposal insertion of L1 sequence in a colon cancer.</title>
        <authorList>
            <person name="Miki Y."/>
            <person name="Nishisho I."/>
            <person name="Horii A."/>
            <person name="Miyoshi Y."/>
            <person name="Utsunomiya J."/>
            <person name="Kinzler K.W."/>
            <person name="Vogelstein B."/>
            <person name="Nakamura Y."/>
        </authorList>
    </citation>
    <scope>NUCLEOTIDE SEQUENCE [GENOMIC DNA] OF 1506-1524</scope>
</reference>
<reference key="8">
    <citation type="journal article" date="1993" name="Science">
        <title>Association of the APC tumor suppressor protein with catenins.</title>
        <authorList>
            <person name="Su L.-K."/>
            <person name="Vogelstein B."/>
            <person name="Kinzler K.W."/>
        </authorList>
    </citation>
    <scope>INTERACTION WITH ALPHA- AND BETA-CATENINS</scope>
</reference>
<reference key="9">
    <citation type="journal article" date="1996" name="Science">
        <title>Binding of APC to the human homolog of the Drosophila discs large tumor suppressor protein.</title>
        <authorList>
            <person name="Matsumine A."/>
            <person name="Ogai A."/>
            <person name="Senda T."/>
            <person name="Okumura N."/>
            <person name="Satoh K."/>
            <person name="Baeg G.-H."/>
            <person name="Kawahara T."/>
            <person name="Kobayashi S."/>
            <person name="Okada M."/>
            <person name="Toyoshima K."/>
            <person name="Akiyama T."/>
        </authorList>
    </citation>
    <scope>INTERACTION WITH DLG1</scope>
</reference>
<reference key="10">
    <citation type="journal article" date="1997" name="Oncogene">
        <title>Cloning and characterization of NE-dlg: a novel human homolog of the Drosophila discs large (dlg) tumor suppressor protein interacts with the APC protein.</title>
        <authorList>
            <person name="Makino K."/>
            <person name="Kuwahara H."/>
            <person name="Masuko N."/>
            <person name="Nishiyama Y."/>
            <person name="Morisaki T."/>
            <person name="Sasaki J."/>
            <person name="Nakao M."/>
            <person name="Kuwano A."/>
            <person name="Nakata M."/>
            <person name="Ushio Y."/>
            <person name="Saya H."/>
        </authorList>
    </citation>
    <scope>INTERACTION WITH DLG3</scope>
    <source>
        <tissue>Fetal brain</tissue>
    </source>
</reference>
<reference key="11">
    <citation type="journal article" date="2001" name="Cancer Res.">
        <title>Human APC2 localization and allelic imbalance.</title>
        <authorList>
            <person name="Jarrett C.R."/>
            <person name="Blancato J."/>
            <person name="Cao T."/>
            <person name="Bressette D.S."/>
            <person name="Cepeda M."/>
            <person name="Young P.E."/>
            <person name="King C.R."/>
            <person name="Byers S.W."/>
        </authorList>
    </citation>
    <scope>INTERACTION WITH APC2</scope>
</reference>
<reference key="12">
    <citation type="journal article" date="2003" name="J. Biol. Chem.">
        <title>Characterization of functional domains of human EB1 family proteins.</title>
        <authorList>
            <person name="Bu W."/>
            <person name="Su L.-K."/>
        </authorList>
    </citation>
    <scope>INTERACTION WITH MAPRE1; MAPRE2 AND MAPRE3</scope>
</reference>
<reference key="13">
    <citation type="journal article" date="2004" name="J. Biol. Chem.">
        <title>Adenomatous polyposis coli is down-regulated by the ubiquitin-proteasome pathway in a process facilitated by Axin.</title>
        <authorList>
            <person name="Choi J."/>
            <person name="Park S.Y."/>
            <person name="Costantini F."/>
            <person name="Jho E.-H."/>
            <person name="Joo C.-K."/>
        </authorList>
    </citation>
    <scope>UBIQUITINATION</scope>
</reference>
<reference key="14">
    <citation type="journal article" date="2006" name="Cell">
        <title>Global, in vivo, and site-specific phosphorylation dynamics in signaling networks.</title>
        <authorList>
            <person name="Olsen J.V."/>
            <person name="Blagoev B."/>
            <person name="Gnad F."/>
            <person name="Macek B."/>
            <person name="Kumar C."/>
            <person name="Mortensen P."/>
            <person name="Mann M."/>
        </authorList>
    </citation>
    <scope>IDENTIFICATION BY MASS SPECTROMETRY [LARGE SCALE ANALYSIS]</scope>
    <source>
        <tissue>Cervix carcinoma</tissue>
    </source>
</reference>
<reference key="15">
    <citation type="journal article" date="2006" name="Genes Cells">
        <title>Human scribble, a novel tumor suppressor identified as a target of high-risk HPV E6 for ubiquitin-mediated degradation, interacts with adenomatous polyposis coli.</title>
        <authorList>
            <person name="Takizawa S."/>
            <person name="Nagasaka K."/>
            <person name="Nakagawa S."/>
            <person name="Yano T."/>
            <person name="Nakagawa K."/>
            <person name="Yasugi T."/>
            <person name="Takeuchi T."/>
            <person name="Kanda T."/>
            <person name="Huibregtse J.M."/>
            <person name="Akiyama T."/>
            <person name="Taketani Y."/>
        </authorList>
    </citation>
    <scope>SUBCELLULAR LOCATION</scope>
    <scope>INTERACTION WITH SCRIB</scope>
    <scope>MUTAGENESIS OF THR-2841 AND VAL-2843</scope>
</reference>
<reference key="16">
    <citation type="journal article" date="2007" name="J. Biol. Chem.">
        <title>Regulated binding of adenomatous polyposis coli protein to actin.</title>
        <authorList>
            <person name="Moseley J.B."/>
            <person name="Bartolini F."/>
            <person name="Okada K."/>
            <person name="Wen Y."/>
            <person name="Gundersen G.G."/>
            <person name="Goode B.L."/>
        </authorList>
    </citation>
    <scope>FUNCTION</scope>
    <scope>INTERACTION WITH MAPRE1 AND ACTIN</scope>
    <scope>PHOSPHORYLATION</scope>
</reference>
<reference key="17">
    <citation type="journal article" date="2007" name="Oncogene">
        <title>Identification and characterization of Asef2, a guanine-nucleotide exchange factor specific for Rac1 and Cdc42.</title>
        <authorList>
            <person name="Kawasaki Y."/>
            <person name="Sagara M."/>
            <person name="Shibata Y."/>
            <person name="Shirouzu M."/>
            <person name="Yokoyama S."/>
            <person name="Akiyama T."/>
        </authorList>
    </citation>
    <scope>FUNCTION</scope>
    <scope>INTERACTION WITH SPATA13</scope>
</reference>
<reference key="18">
    <citation type="journal article" date="2008" name="Genes Dev.">
        <title>Trabid, a new positive regulator of Wnt-induced transcription with preference for binding and cleaving K63-linked ubiquitin chains.</title>
        <authorList>
            <person name="Tran H."/>
            <person name="Hamada F."/>
            <person name="Schwarz-Romond T."/>
            <person name="Bienz M."/>
        </authorList>
    </citation>
    <scope>DEUBIQUITINATION</scope>
</reference>
<reference key="19">
    <citation type="journal article" date="2008" name="J. Proteome Res.">
        <title>Combining protein-based IMAC, peptide-based IMAC, and MudPIT for efficient phosphoproteomic analysis.</title>
        <authorList>
            <person name="Cantin G.T."/>
            <person name="Yi W."/>
            <person name="Lu B."/>
            <person name="Park S.K."/>
            <person name="Xu T."/>
            <person name="Lee J.-D."/>
            <person name="Yates J.R. III"/>
        </authorList>
    </citation>
    <scope>PHOSPHORYLATION [LARGE SCALE ANALYSIS] AT SER-2671</scope>
    <scope>IDENTIFICATION BY MASS SPECTROMETRY [LARGE SCALE ANALYSIS]</scope>
    <source>
        <tissue>Cervix carcinoma</tissue>
    </source>
</reference>
<reference key="20">
    <citation type="journal article" date="2008" name="Proc. Natl. Acad. Sci. U.S.A.">
        <title>A quantitative atlas of mitotic phosphorylation.</title>
        <authorList>
            <person name="Dephoure N."/>
            <person name="Zhou C."/>
            <person name="Villen J."/>
            <person name="Beausoleil S.A."/>
            <person name="Bakalarski C.E."/>
            <person name="Elledge S.J."/>
            <person name="Gygi S.P."/>
        </authorList>
    </citation>
    <scope>PHOSPHORYLATION [LARGE SCALE ANALYSIS] AT SER-780; SER-1042; SER-1360; SER-1861; SER-1863; SER-1864; THR-2151; SER-2260; SER-2270; SER-2283; SER-2473; SER-2535; SER-2671; SER-2674; THR-2679 AND SER-2789</scope>
    <scope>IDENTIFICATION BY MASS SPECTROMETRY [LARGE SCALE ANALYSIS]</scope>
    <source>
        <tissue>Cervix carcinoma</tissue>
    </source>
</reference>
<reference key="21">
    <citation type="journal article" date="2009" name="Anal. Chem.">
        <title>Lys-N and trypsin cover complementary parts of the phosphoproteome in a refined SCX-based approach.</title>
        <authorList>
            <person name="Gauci S."/>
            <person name="Helbig A.O."/>
            <person name="Slijper M."/>
            <person name="Krijgsveld J."/>
            <person name="Heck A.J."/>
            <person name="Mohammed S."/>
        </authorList>
    </citation>
    <scope>IDENTIFICATION BY MASS SPECTROMETRY [LARGE SCALE ANALYSIS]</scope>
</reference>
<reference key="22">
    <citation type="journal article" date="2009" name="Cancer Lett.">
        <title>Adenomatous polyposis coli 1A is likely to be methylated as a passenger in human gastric carcinogenesis.</title>
        <authorList>
            <person name="Hosoya K."/>
            <person name="Yamashita S."/>
            <person name="Ando T."/>
            <person name="Nakajima T."/>
            <person name="Itoh F."/>
            <person name="Ushijima T."/>
        </authorList>
    </citation>
    <scope>ALTERNATIVE PROMOTER USAGE</scope>
    <scope>TISSUE SPECIFICITY</scope>
</reference>
<reference key="23">
    <citation type="journal article" date="2009" name="Cell">
        <title>An EB1-binding motif acts as a microtubule tip localization signal.</title>
        <authorList>
            <person name="Honnappa S."/>
            <person name="Gouveia S.M."/>
            <person name="Weisbrich A."/>
            <person name="Damberger F.F."/>
            <person name="Bhavesh N.S."/>
            <person name="Jawhari H."/>
            <person name="Grigoriev I."/>
            <person name="van Rijssel F.J."/>
            <person name="Buey R.M."/>
            <person name="Lawera A."/>
            <person name="Jelesarov I."/>
            <person name="Winkler F.K."/>
            <person name="Wuthrich K."/>
            <person name="Akhmanova A."/>
            <person name="Steinmetz M.O."/>
        </authorList>
    </citation>
    <scope>INTERACTION WITH MAPRE1</scope>
    <scope>SUBCELLULAR LOCATION</scope>
</reference>
<reference key="24">
    <citation type="journal article" date="2009" name="EMBO Rep.">
        <title>The adenomatous polyposis coli-associated exchange factors Asef and Asef2 are required for adenoma formation in Apc(Min/+)mice.</title>
        <authorList>
            <person name="Kawasaki Y."/>
            <person name="Tsuji S."/>
            <person name="Muroya K."/>
            <person name="Furukawa S."/>
            <person name="Shibata Y."/>
            <person name="Okuno M."/>
            <person name="Ohwada S."/>
            <person name="Akiyama T."/>
        </authorList>
    </citation>
    <scope>FUNCTION</scope>
</reference>
<reference key="25">
    <citation type="journal article" date="2009" name="Oncogene">
        <title>Asef2 and Neurabin2 cooperatively regulate actin cytoskeletal organization and are involved in HGF-induced cell migration.</title>
        <authorList>
            <person name="Sagara M."/>
            <person name="Kawasaki Y."/>
            <person name="Iemura S.I."/>
            <person name="Natsume T."/>
            <person name="Takai Y."/>
            <person name="Akiyama T."/>
        </authorList>
    </citation>
    <scope>FUNCTION</scope>
    <scope>SUBCELLULAR LOCATION</scope>
</reference>
<reference key="26">
    <citation type="journal article" date="2009" name="Sci. Signal.">
        <title>Quantitative phosphoproteomic analysis of T cell receptor signaling reveals system-wide modulation of protein-protein interactions.</title>
        <authorList>
            <person name="Mayya V."/>
            <person name="Lundgren D.H."/>
            <person name="Hwang S.-I."/>
            <person name="Rezaul K."/>
            <person name="Wu L."/>
            <person name="Eng J.K."/>
            <person name="Rodionov V."/>
            <person name="Han D.K."/>
        </authorList>
    </citation>
    <scope>IDENTIFICATION BY MASS SPECTROMETRY [LARGE SCALE ANALYSIS]</scope>
    <source>
        <tissue>Leukemic T-cell</tissue>
    </source>
</reference>
<reference key="27">
    <citation type="journal article" date="2010" name="Proc. Natl. Acad. Sci. U.S.A.">
        <title>ErbB2 receptor controls microtubule capture by recruiting ACF7 to the plasma membrane of migrating cells.</title>
        <authorList>
            <person name="Zaoui K."/>
            <person name="Benseddik K."/>
            <person name="Daou P."/>
            <person name="Salaun D."/>
            <person name="Badache A."/>
        </authorList>
    </citation>
    <scope>FUNCTION</scope>
    <scope>SUBCELLULAR LOCATION</scope>
</reference>
<reference key="28">
    <citation type="journal article" date="2010" name="Sci. Signal.">
        <title>Quantitative phosphoproteomics reveals widespread full phosphorylation site occupancy during mitosis.</title>
        <authorList>
            <person name="Olsen J.V."/>
            <person name="Vermeulen M."/>
            <person name="Santamaria A."/>
            <person name="Kumar C."/>
            <person name="Miller M.L."/>
            <person name="Jensen L.J."/>
            <person name="Gnad F."/>
            <person name="Cox J."/>
            <person name="Jensen T.S."/>
            <person name="Nigg E.A."/>
            <person name="Brunak S."/>
            <person name="Mann M."/>
        </authorList>
    </citation>
    <scope>PHOSPHORYLATION [LARGE SCALE ANALYSIS] AT SER-744 AND SER-780</scope>
    <scope>IDENTIFICATION BY MASS SPECTROMETRY [LARGE SCALE ANALYSIS]</scope>
    <source>
        <tissue>Cervix carcinoma</tissue>
    </source>
</reference>
<reference key="29">
    <citation type="journal article" date="2011" name="J. Biol. Chem.">
        <title>Structural and functional characterization of the Wnt inhibitor APC membrane recruitment 1 (Amer1).</title>
        <authorList>
            <person name="Tanneberger K."/>
            <person name="Pfister A.S."/>
            <person name="Kriz V."/>
            <person name="Bryja V."/>
            <person name="Schambony A."/>
            <person name="Behrens J."/>
        </authorList>
    </citation>
    <scope>INTERACTION WITH AMER1</scope>
</reference>
<reference key="30">
    <citation type="journal article" date="2011" name="Oncogene">
        <title>Inactivation of promoter 1B of APC causes partial gene silencing: evidence for a significant role of the promoter in regulation and causative of familial adenomatous polyposis.</title>
        <authorList>
            <person name="Rohlin A."/>
            <person name="Engwall Y."/>
            <person name="Fritzell K."/>
            <person name="Goeransson K."/>
            <person name="Bergsten A."/>
            <person name="Einbeigi Z."/>
            <person name="Nilbert M."/>
            <person name="Karlsson P."/>
            <person name="Bjoerk J."/>
            <person name="Nordling M."/>
        </authorList>
    </citation>
    <scope>ALTERNATIVE PROMOTER USAGE</scope>
    <scope>TISSUE SPECIFICITY</scope>
    <scope>INVOLVEMENT IN FAP1</scope>
</reference>
<reference key="31">
    <citation type="journal article" date="2011" name="Sci. Signal.">
        <title>System-wide temporal characterization of the proteome and phosphoproteome of human embryonic stem cell differentiation.</title>
        <authorList>
            <person name="Rigbolt K.T."/>
            <person name="Prokhorova T.A."/>
            <person name="Akimov V."/>
            <person name="Henningsen J."/>
            <person name="Johansen P.T."/>
            <person name="Kratchmarova I."/>
            <person name="Kassem M."/>
            <person name="Mann M."/>
            <person name="Olsen J.V."/>
            <person name="Blagoev B."/>
        </authorList>
    </citation>
    <scope>PHOSPHORYLATION [LARGE SCALE ANALYSIS] AT SER-1861; SER-1863 AND SER-1864</scope>
    <scope>IDENTIFICATION BY MASS SPECTROMETRY [LARGE SCALE ANALYSIS]</scope>
</reference>
<reference key="32">
    <citation type="journal article" date="2012" name="J. Biol. Chem.">
        <title>Amer2 protein is a novel negative regulator of Wnt/beta-Catenin signaling involved in neuroectodermal patterning.</title>
        <authorList>
            <person name="Pfister A.S."/>
            <person name="Tanneberger K."/>
            <person name="Schambony A."/>
            <person name="Behrens J."/>
        </authorList>
    </citation>
    <scope>INTERACTION WITH AMER2</scope>
</reference>
<reference key="33">
    <citation type="journal article" date="2012" name="Proc. Natl. Acad. Sci. U.S.A.">
        <title>N-terminal acetylome analyses and functional insights of the N-terminal acetyltransferase NatB.</title>
        <authorList>
            <person name="Van Damme P."/>
            <person name="Lasa M."/>
            <person name="Polevoda B."/>
            <person name="Gazquez C."/>
            <person name="Elosegui-Artola A."/>
            <person name="Kim D.S."/>
            <person name="De Juan-Pardo E."/>
            <person name="Demeyer K."/>
            <person name="Hole K."/>
            <person name="Larrea E."/>
            <person name="Timmerman E."/>
            <person name="Prieto J."/>
            <person name="Arnesen T."/>
            <person name="Sherman F."/>
            <person name="Gevaert K."/>
            <person name="Aldabe R."/>
        </authorList>
    </citation>
    <scope>ACETYLATION [LARGE SCALE ANALYSIS] AT ALA-2</scope>
    <scope>CLEAVAGE OF INITIATOR METHIONINE [LARGE SCALE ANALYSIS]</scope>
    <scope>IDENTIFICATION BY MASS SPECTROMETRY [LARGE SCALE ANALYSIS]</scope>
</reference>
<reference key="34">
    <citation type="journal article" date="2013" name="J. Proteome Res.">
        <title>Toward a comprehensive characterization of a human cancer cell phosphoproteome.</title>
        <authorList>
            <person name="Zhou H."/>
            <person name="Di Palma S."/>
            <person name="Preisinger C."/>
            <person name="Peng M."/>
            <person name="Polat A.N."/>
            <person name="Heck A.J."/>
            <person name="Mohammed S."/>
        </authorList>
    </citation>
    <scope>PHOSPHORYLATION [LARGE SCALE ANALYSIS] AT SER-744; SER-748; SER-908; SER-1042; SER-1371; SER-1385; THR-1438; SER-1774; SER-1861; SER-2260; SER-2283; SER-2569; SER-2674; SER-2724 AND SER-2789</scope>
    <scope>IDENTIFICATION BY MASS SPECTROMETRY [LARGE SCALE ANALYSIS]</scope>
    <source>
        <tissue>Cervix carcinoma</tissue>
        <tissue>Erythroleukemia</tissue>
    </source>
</reference>
<reference key="35">
    <citation type="journal article" date="2014" name="J. Proteomics">
        <title>An enzyme assisted RP-RPLC approach for in-depth analysis of human liver phosphoproteome.</title>
        <authorList>
            <person name="Bian Y."/>
            <person name="Song C."/>
            <person name="Cheng K."/>
            <person name="Dong M."/>
            <person name="Wang F."/>
            <person name="Huang J."/>
            <person name="Sun D."/>
            <person name="Wang L."/>
            <person name="Ye M."/>
            <person name="Zou H."/>
        </authorList>
    </citation>
    <scope>PHOSPHORYLATION [LARGE SCALE ANALYSIS] AT SER-780</scope>
    <scope>IDENTIFICATION BY MASS SPECTROMETRY [LARGE SCALE ANALYSIS]</scope>
    <source>
        <tissue>Liver</tissue>
    </source>
</reference>
<reference key="36">
    <citation type="journal article" date="2015" name="J. Cell. Biochem.">
        <title>HN1 negatively influences the beta-catenin/E-cadherin interaction, and contributes to migration in prostate cells.</title>
        <authorList>
            <person name="Varisli L."/>
            <person name="Ozturk B.E."/>
            <person name="Akyuz G.K."/>
            <person name="Korkmaz K.S."/>
        </authorList>
    </citation>
    <scope>INTERACTION WITH JPT1</scope>
</reference>
<reference key="37">
    <citation type="journal article" date="2016" name="Sci. Rep.">
        <title>Reduced expression of APC-1B but not APC-1A by the deletion of promoter 1B is responsible for familial adenomatous polyposis.</title>
        <authorList>
            <person name="Yamaguchi K."/>
            <person name="Nagayama S."/>
            <person name="Shimizu E."/>
            <person name="Komura M."/>
            <person name="Yamaguchi R."/>
            <person name="Shibuya T."/>
            <person name="Arai M."/>
            <person name="Hatakeyama S."/>
            <person name="Ikenoue T."/>
            <person name="Ueno M."/>
            <person name="Miyano S."/>
            <person name="Imoto S."/>
            <person name="Furukawa Y."/>
        </authorList>
    </citation>
    <scope>ALTERNATIVE PROMOTER USAGE</scope>
    <scope>TISSUE SPECIFICITY</scope>
    <scope>INVOLVEMENT IN FAP1</scope>
</reference>
<reference key="38">
    <citation type="journal article" date="2000" name="J. Mol. Biol.">
        <title>Crystal structure of the amino-terminal coiled-coil domain of the APC tumor suppressor.</title>
        <authorList>
            <person name="Day C.L."/>
            <person name="Alber T."/>
        </authorList>
    </citation>
    <scope>X-RAY CRYSTALLOGRAPHY (2.4 ANGSTROMS) OF 2-55</scope>
</reference>
<reference key="39">
    <citation type="journal article" date="2001" name="EMBO J.">
        <title>Molecular mechanisms of beta-catenin recognition by adenomatous polyposis coli revealed by the structure of an APC-beta-catenin complex.</title>
        <authorList>
            <person name="Eklof Spink K."/>
            <person name="Fridman S.G."/>
            <person name="Weis W.I."/>
        </authorList>
    </citation>
    <scope>X-RAY CRYSTALLOGRAPHY (3.1 ANGSTROMS) OF 1021-1035 IN COMPLEX WITH CTNNB1</scope>
</reference>
<reference key="40">
    <citation type="journal article" date="2000" name="EMBO J.">
        <title>Structural basis of the axin-adenomatous polyposis coli interaction.</title>
        <authorList>
            <person name="Spink K.E."/>
            <person name="Polakis P."/>
            <person name="Weis W.I."/>
        </authorList>
    </citation>
    <scope>X-RAY CRYSTALLOGRAPHY (1.9 ANGSTROMS) OF 2034-2049 IN COMPLEX WITH AXIN1</scope>
    <scope>INTERACTION WITH AXIN1</scope>
</reference>
<reference key="41">
    <citation type="journal article" date="2010" name="Biochemistry">
        <title>Structural basis of the recognition of the SAMP motif of adenomatous polyposis coli by the Src-homology 3 domain.</title>
        <authorList>
            <person name="Kaieda S."/>
            <person name="Matsui C."/>
            <person name="Mimori-Kiyosue Y."/>
            <person name="Ikegami T."/>
        </authorList>
    </citation>
    <scope>STRUCTURE BY NMR OF 1578-1596 IN COMPLEX WITH ASAP1</scope>
    <scope>INTERACTION WITH ASAP1</scope>
</reference>
<reference key="42">
    <citation type="journal article" date="2011" name="Biochem. Biophys. Res. Commun.">
        <title>Crystal structure of the armadillo repeat domain of adenomatous polyposis coli which reveals its inherent flexibility.</title>
        <authorList>
            <person name="Zhang Z."/>
            <person name="Lin K."/>
            <person name="Gao L."/>
            <person name="Chen L."/>
            <person name="Shi X."/>
            <person name="Wu G."/>
        </authorList>
    </citation>
    <scope>X-RAY CRYSTALLOGRAPHY (2.9 ANGSTROMS) OF 407-775</scope>
    <scope>DOMAIN ARM REPEATS</scope>
</reference>
<reference key="43">
    <citation type="journal article" date="2011" name="Structure">
        <title>Crystal structures of the armadillo repeat domain of adenomatous polyposis coli and its complex with the tyrosine-rich domain of Sam68.</title>
        <authorList>
            <person name="Morishita E.C."/>
            <person name="Murayama K."/>
            <person name="Kato-Murayama M."/>
            <person name="Ishizuka-Katsura Y."/>
            <person name="Tomabechi Y."/>
            <person name="Hayashi T."/>
            <person name="Terada T."/>
            <person name="Handa N."/>
            <person name="Shirouzu M."/>
            <person name="Akiyama T."/>
            <person name="Yokoyama S."/>
        </authorList>
    </citation>
    <scope>X-RAY CRYSTALLOGRAPHY (2.4 ANGSTROMS) OF 396-732 IN COMPLEX WITH KHDRBS1</scope>
    <scope>INTERACTION WITH KHDRBS1</scope>
    <scope>MUTAGENESIS OF LYS-516 AND ARG-549</scope>
</reference>
<reference key="44">
    <citation type="journal article" date="1991" name="Science">
        <title>Mutations of chromosome 5q21 genes in FAP and colorectal cancer patients.</title>
        <authorList>
            <person name="Nishisho I."/>
            <person name="Nakamura Y."/>
            <person name="Miyoshi Y."/>
            <person name="Miki Y."/>
            <person name="Ando H."/>
            <person name="Horii A."/>
            <person name="Koyama K."/>
            <person name="Utsunomiya J."/>
            <person name="Baba S."/>
            <person name="Hedge P."/>
            <person name="Markham A."/>
            <person name="Krush A.J."/>
            <person name="Petersen G.M."/>
            <person name="Hamilton S.R."/>
            <person name="Nilbert M.C."/>
            <person name="Levy D.B."/>
            <person name="Bryan T.M."/>
            <person name="Preisinger A.C."/>
            <person name="Smith K.J."/>
            <person name="Su L.-K."/>
            <person name="Kinzler K.W."/>
            <person name="Vogelstein B."/>
        </authorList>
    </citation>
    <scope>VARIANTS FAP1</scope>
</reference>
<reference key="45">
    <citation type="journal article" date="1992" name="Hum. Mol. Genet.">
        <title>Somatic mutations of the APC gene in colorectal tumors: mutation cluster region in the APC gene.</title>
        <authorList>
            <person name="Miyoshi Y."/>
            <person name="Nagase H."/>
            <person name="Ando H."/>
            <person name="Ichii S."/>
            <person name="Nakatsuru S."/>
            <person name="Aoki T."/>
            <person name="Miki Y."/>
            <person name="Mori T."/>
            <person name="Nakamura Y."/>
        </authorList>
    </citation>
    <scope>VARIANT FAP1 GLY-911</scope>
</reference>
<reference key="46">
    <citation type="journal article" date="1992" name="Hum. Mol. Genet.">
        <title>Somatic mutation of the APC gene in gastric cancer: frequent mutations in very well differentiated adenocarcinoma and signet-ring cell carcinoma.</title>
        <authorList>
            <person name="Nakatsuru S."/>
            <person name="Yanagisawa A."/>
            <person name="Ichii S."/>
            <person name="Tahara E."/>
            <person name="Kato Y."/>
            <person name="Nakamura Y."/>
            <person name="Horii A."/>
        </authorList>
    </citation>
    <scope>VARIANTS FAP1</scope>
</reference>
<reference key="47">
    <citation type="journal article" date="1992" name="Hum. Mutat.">
        <title>Screening for germ-line mutations in familial adenomatous polyposis patients: 61 new patients and a summary of 150 unrelated patients.</title>
        <authorList>
            <person name="Nagase H."/>
            <person name="Miyoshi Y."/>
            <person name="Horii A."/>
            <person name="Aoki T."/>
            <person name="Petersen G.M."/>
            <person name="Vogelstein B."/>
            <person name="Maher E."/>
            <person name="Ogawa M."/>
            <person name="Maruyama M."/>
            <person name="Utsunomiya J."/>
            <person name="Baba S."/>
            <person name="Nakamura Y."/>
        </authorList>
    </citation>
    <scope>VARIANTS FAP1 MET-1292 AND TRP-1348</scope>
    <scope>VARIANTS ASP-1118; VAL-1304 AND SER-2502</scope>
</reference>
<reference key="48">
    <citation type="journal article" date="1992" name="Proc. Natl. Acad. Sci. U.S.A.">
        <title>Germ-line mutations of the APC gene in 53 familial adenomatous polyposis patients.</title>
        <authorList>
            <person name="Miyoshi Y."/>
            <person name="Ando H."/>
            <person name="Nagase H."/>
            <person name="Nishisho I."/>
            <person name="Horii A."/>
            <person name="Miki Y."/>
            <person name="Mori T."/>
            <person name="Utsunomiya J."/>
            <person name="Baba S."/>
            <person name="Petersen G."/>
        </authorList>
    </citation>
    <scope>VARIANTS FAP1 CYS-2621 AND PHE-2839</scope>
</reference>
<reference key="49">
    <citation type="journal article" date="1993" name="Hum. Mutat.">
        <title>Mutations of the APC (adenomatous polyposis coli) gene.</title>
        <authorList>
            <person name="Nagase H."/>
            <person name="Nakamura Y."/>
        </authorList>
    </citation>
    <scope>VARIANTS FAP1 CYS-414; THR-784 AND LEU-1176</scope>
</reference>
<reference key="50">
    <citation type="journal article" date="1994" name="Eur. J. Cancer">
        <title>Mutational analysis of the first 14 exons of the adenomatous polyposis coli (APC) gene.</title>
        <authorList>
            <person name="Dobbie Z."/>
            <person name="Spycher M."/>
            <person name="Huerliman R."/>
            <person name="Ammann R."/>
            <person name="Ammann T."/>
            <person name="Roth J."/>
            <person name="Mueller A."/>
            <person name="Mueller H."/>
            <person name="Scott R.J."/>
        </authorList>
    </citation>
    <scope>VARIANT FAP1 TRP-99</scope>
    <source>
        <tissue>Peripheral blood lymphocyte</tissue>
    </source>
</reference>
<reference key="51">
    <citation type="journal article" date="1994" name="Hum. Mol. Genet.">
        <title>Four novel mutations of the APC (adenomatous polyposis coli) gene in FAP patients.</title>
        <authorList>
            <person name="Stella A."/>
            <person name="Montera M."/>
            <person name="Resta N."/>
            <person name="Marchese C."/>
            <person name="Susca F."/>
            <person name="Gentile M."/>
            <person name="Romio L."/>
            <person name="Pilia S."/>
            <person name="Prete F."/>
            <person name="Mareni C."/>
            <person name="Guanti G."/>
        </authorList>
    </citation>
    <scope>VARIANT FAP1 GLY-722</scope>
</reference>
<reference key="52">
    <citation type="journal article" date="1994" name="Hum. Mol. Genet.">
        <authorList>
            <person name="Stella A."/>
            <person name="Montera M."/>
            <person name="Resta N."/>
            <person name="Marchese C."/>
            <person name="Susca F."/>
            <person name="Gentile M."/>
            <person name="Romio L."/>
            <person name="Pilia S."/>
            <person name="Prete F."/>
            <person name="Mareni C."/>
            <person name="Guanti G."/>
        </authorList>
    </citation>
    <scope>ERRATUM OF PUBMED:7833931</scope>
</reference>
<reference key="53">
    <citation type="journal article" date="1995" name="N. Engl. J. Med.">
        <title>The molecular basis of Turcot's syndrome.</title>
        <authorList>
            <person name="Hamilton S.R."/>
            <person name="Liu B."/>
            <person name="Parsons R.E."/>
            <person name="Papadopoulos N."/>
            <person name="Jen J."/>
            <person name="Powell S.M."/>
            <person name="Krush A.J."/>
            <person name="Berk T."/>
            <person name="Cohen Z."/>
            <person name="Tetu B."/>
            <person name="Burger P.C."/>
            <person name="Wood P.A."/>
            <person name="Taqi F."/>
            <person name="Booker S.V."/>
            <person name="Petersen G.M."/>
            <person name="Offerhaus G.J.A."/>
            <person name="Tersmette A.C."/>
            <person name="Giardiello F.M."/>
            <person name="Vogelstein B."/>
            <person name="Kinzler K.W."/>
        </authorList>
    </citation>
    <scope>INVOLVEMENT IN FAP1</scope>
</reference>
<reference key="54">
    <citation type="journal article" date="1996" name="Am. J. Hum. Genet.">
        <title>Hereditary desmoid disease due to a frameshift mutation at codon 1924 of the APC gene.</title>
        <authorList>
            <person name="Eccles D.M."/>
            <person name="van der Luijt R.B."/>
            <person name="Breukel C."/>
            <person name="Bullman H."/>
            <person name="Bunyan D."/>
            <person name="Fisher A."/>
            <person name="Barber J."/>
            <person name="du Boulay C."/>
            <person name="Primrose J."/>
            <person name="Burn J."/>
            <person name="Fodde R."/>
        </authorList>
    </citation>
    <scope>INVOLVEMENT IN DESMD</scope>
</reference>
<reference key="55">
    <citation type="journal article" date="1996" name="Cancer Res.">
        <title>Somatic mutations of the APC gene in sporadic hepatoblastomas.</title>
        <authorList>
            <person name="Oda H."/>
            <person name="Imai Y."/>
            <person name="Nakatsuru Y."/>
            <person name="Hata J."/>
            <person name="Ishikawa T."/>
        </authorList>
    </citation>
    <scope>VARIANT HEPATOBLASTOMA CYS-1395</scope>
</reference>
<reference key="56">
    <citation type="journal article" date="1997" name="Hum. Mutat.">
        <title>Molecular analysis of the APC gene in 105 Dutch kindreds with familial adenomatous polyposis: 67 germline mutations identified by DGGE, PTT, and southern analysis.</title>
        <authorList>
            <person name="van der Luijt R.B."/>
            <person name="Meera Khan P."/>
            <person name="Vasen H.F.A."/>
            <person name="Tops C.M.J."/>
            <person name="van Leeuwen-Cornelisse I.S.J."/>
            <person name="Wijnen J.T."/>
            <person name="van der Klift H.M."/>
            <person name="Plug R.J."/>
            <person name="Griffioen G."/>
            <person name="Fodde R."/>
        </authorList>
    </citation>
    <scope>VARIANT FAP1 ILE-171</scope>
</reference>
<reference key="57">
    <citation type="journal article" date="1997" name="Oncogene">
        <title>Drastic genetic instability of tumors and normal tissues in Turcot syndrome.</title>
        <authorList>
            <person name="Miyaki M."/>
            <person name="Nishio J."/>
            <person name="Konishi M."/>
            <person name="Kikuchi-Yanoshita R."/>
            <person name="Tanaka K."/>
            <person name="Muraoka M."/>
            <person name="Nagato M."/>
            <person name="Chong J.-M."/>
            <person name="Koike M."/>
            <person name="Terada T."/>
            <person name="Kawahara Y."/>
            <person name="Fukutome A."/>
            <person name="Tomiyama J."/>
            <person name="Chuganji Y."/>
            <person name="Momoi M."/>
            <person name="Utsunomiya J."/>
        </authorList>
    </citation>
    <scope>VARIANTS COLORECTAL CARCINOMA THR-880; ILE-890 AND VAL-1508</scope>
</reference>
<reference key="58">
    <citation type="journal article" date="1998" name="Nat. Genet.">
        <title>The APC I1307K allele and breast cancer risk.</title>
        <authorList>
            <person name="Redston M."/>
            <person name="Nathanson K.L."/>
            <person name="Yuan Z.Q."/>
            <person name="Neuhausen S.L."/>
            <person name="Satagopan J."/>
            <person name="Wong N."/>
            <person name="Yang D."/>
            <person name="Nafa D."/>
            <person name="Abrahamson J."/>
            <person name="Ozcelik H."/>
            <person name="Antin-Ozerkis D."/>
            <person name="Andrulis I."/>
            <person name="Daly M."/>
            <person name="Pinsky L."/>
            <person name="Schrag D."/>
            <person name="Gallinger S."/>
            <person name="Kaback M."/>
            <person name="King M.-C."/>
            <person name="Woodage T."/>
            <person name="Brody L.C."/>
            <person name="Godwin A."/>
            <person name="Warner E."/>
            <person name="Weber B."/>
            <person name="Foulkes W."/>
            <person name="Offit K."/>
        </authorList>
    </citation>
    <scope>VARIANT LYS-1307</scope>
</reference>
<reference key="59">
    <citation type="journal article" date="1998" name="Proc. Natl. Acad. Sci. U.S.A.">
        <title>The APC variants I1307K and E1317Q are associated with colorectal tumors, but not always with a family history.</title>
        <authorList>
            <person name="Frayling I.M."/>
            <person name="Beck N.E."/>
            <person name="Ilyas M."/>
            <person name="Dove-Edwin I."/>
            <person name="Goodman P."/>
            <person name="Pack K."/>
            <person name="Bell J.A."/>
            <person name="Williams C.B."/>
            <person name="Hodgson S.V."/>
            <person name="Thomas H.J.W."/>
            <person name="Talbot I.C."/>
            <person name="Bodmer W.F."/>
            <person name="Tomlinson I.P.M."/>
        </authorList>
    </citation>
    <scope>VARIANTS LYS-1307 AND GLN-1317</scope>
    <source>
        <tissue>Peripheral blood</tissue>
    </source>
</reference>
<reference key="60">
    <citation type="journal article" date="1998" name="Nat. Genet.">
        <title>The APC I1307K allele and cancer risk in a community-based study of Ashkenazi Jews.</title>
        <authorList>
            <person name="Woodage T."/>
            <person name="King S.M."/>
            <person name="Wacholder S."/>
            <person name="Hartge P."/>
            <person name="Struewing J.P."/>
            <person name="McAdams M."/>
            <person name="Laken S.J."/>
            <person name="Tucker M.A."/>
            <person name="Brody L.C."/>
        </authorList>
    </citation>
    <scope>VARIANT LYS-1307</scope>
</reference>
<reference key="61">
    <citation type="journal article" date="1999" name="Am. J. Hum. Genet.">
        <title>Inherited colorectal polyposis and cancer risk of the APC I1307K polymorphism.</title>
        <authorList>
            <person name="Gryfe R."/>
            <person name="Di Nicola N."/>
            <person name="Lal G."/>
            <person name="Gallinger S."/>
            <person name="Redston M."/>
        </authorList>
    </citation>
    <scope>VARIANT LYS-1307</scope>
</reference>
<reference key="62">
    <citation type="journal article" date="1999" name="J. Med. Genet.">
        <title>Molecular analysis of the APC gene in 205 families: extended genotype-phenotype correlations in FAP and evidence for the role of APC amino acid changes in colorectal cancer predisposition.</title>
        <authorList>
            <person name="Wallis Y.L."/>
            <person name="Morton D.G."/>
            <person name="McKeown C.M."/>
            <person name="Macdonald F."/>
        </authorList>
    </citation>
    <scope>VARIANTS GLY-1057; CYS-1171; ASP-1822 AND THR-2738</scope>
</reference>
<reference key="63">
    <citation type="journal article" date="1999" name="Nat. Med.">
        <title>The type of somatic mutation at APC in familial adenomatous polyposis is determined by the site of the germline mutation: a new facet to Knudson's 'two-hit' hypothesis.</title>
        <authorList>
            <person name="Lamlum H."/>
            <person name="Ilyas M."/>
            <person name="Rowan A."/>
            <person name="Clark S."/>
            <person name="Johnson V."/>
            <person name="Bell J.A."/>
            <person name="Frayling I.M."/>
            <person name="Efstathiou J."/>
            <person name="Pack K."/>
            <person name="Payne S."/>
            <person name="Roylance R."/>
            <person name="Gorman P."/>
            <person name="Sheer D."/>
            <person name="Neale K."/>
            <person name="Phillips R."/>
            <person name="Talbot I.C."/>
            <person name="Bodmer W.F."/>
            <person name="Tomlinson I.P.M."/>
        </authorList>
    </citation>
    <scope>VARIANT FAP1 PRO-1184</scope>
</reference>
<reference key="64">
    <citation type="journal article" date="2000" name="Am. J. Pathol.">
        <title>APC mutations in sporadic medulloblastomas.</title>
        <authorList>
            <person name="Huang H."/>
            <person name="Mahler-Araujo B.M."/>
            <person name="Sankila A."/>
            <person name="Chimelli L."/>
            <person name="Yonekawa Y."/>
            <person name="Kleihues P."/>
            <person name="Ohgaki H."/>
        </authorList>
    </citation>
    <scope>VARIANTS MDB VAL-1296; ILE-1472 AND GLY-1495</scope>
</reference>
<reference key="65">
    <citation type="journal article" date="2000" name="Clin. Genet.">
        <title>A germline mutation at the extreme 3' end of the APC gene results in a severe desmoid phenotype and is associated with overexpression of beta-catenin in the desmoid tumor.</title>
        <authorList>
            <person name="Couture J."/>
            <person name="Mitri A."/>
            <person name="Lagace R."/>
            <person name="Smits R."/>
            <person name="Berk T."/>
            <person name="Bouchard H.-L."/>
            <person name="Fodde R."/>
            <person name="Alman B."/>
            <person name="Bapat B."/>
        </authorList>
    </citation>
    <scope>INVOLVEMENT IN DESMD</scope>
</reference>
<reference key="66">
    <citation type="journal article" date="2006" name="Science">
        <title>The consensus coding sequences of human breast and colorectal cancers.</title>
        <authorList>
            <person name="Sjoeblom T."/>
            <person name="Jones S."/>
            <person name="Wood L.D."/>
            <person name="Parsons D.W."/>
            <person name="Lin J."/>
            <person name="Barber T.D."/>
            <person name="Mandelker D."/>
            <person name="Leary R.J."/>
            <person name="Ptak J."/>
            <person name="Silliman N."/>
            <person name="Szabo S."/>
            <person name="Buckhaults P."/>
            <person name="Farrell C."/>
            <person name="Meeh P."/>
            <person name="Markowitz S.D."/>
            <person name="Willis J."/>
            <person name="Dawson D."/>
            <person name="Willson J.K.V."/>
            <person name="Gazdar A.F."/>
            <person name="Hartigan J."/>
            <person name="Wu L."/>
            <person name="Liu C."/>
            <person name="Parmigiani G."/>
            <person name="Park B.H."/>
            <person name="Bachman K.E."/>
            <person name="Papadopoulos N."/>
            <person name="Vogelstein B."/>
            <person name="Kinzler K.W."/>
            <person name="Velculescu V.E."/>
        </authorList>
    </citation>
    <scope>VARIANT [LARGE SCALE ANALYSIS] PHE-1254</scope>
</reference>
<reference key="67">
    <citation type="journal article" date="2016" name="Am. J. Hum. Genet.">
        <title>Point Mutations in Exon 1B of APC Reveal Gastric Adenocarcinoma and Proximal Polyposis of the Stomach as a Familial Adenomatous Polyposis Variant.</title>
        <authorList>
            <person name="Li J."/>
            <person name="Woods S.L."/>
            <person name="Healey S."/>
            <person name="Beesley J."/>
            <person name="Chen X."/>
            <person name="Lee J.S."/>
            <person name="Sivakumaran H."/>
            <person name="Wayte N."/>
            <person name="Nones K."/>
            <person name="Waterfall J.J."/>
            <person name="Pearson J."/>
            <person name="Patch A.M."/>
            <person name="Senz J."/>
            <person name="Ferreira M.A."/>
            <person name="Kaurah P."/>
            <person name="Mackenzie R."/>
            <person name="Heravi-Moussavi A."/>
            <person name="Hansford S."/>
            <person name="Lannagan T.R.M."/>
            <person name="Spurdle A.B."/>
            <person name="Simpson P.T."/>
            <person name="da Silva L."/>
            <person name="Lakhani S.R."/>
            <person name="Clouston A.D."/>
            <person name="Bettington M."/>
            <person name="Grimpen F."/>
            <person name="Busuttil R.A."/>
            <person name="Di Costanzo N."/>
            <person name="Boussioutas A."/>
            <person name="Jeanjean M."/>
            <person name="Chong G."/>
            <person name="Fabre A."/>
            <person name="Olschwang S."/>
            <person name="Faulkner G.J."/>
            <person name="Bellos E."/>
            <person name="Coin L."/>
            <person name="Rioux K."/>
            <person name="Bathe O.F."/>
            <person name="Wen X."/>
            <person name="Martin H.C."/>
            <person name="Neklason D.W."/>
            <person name="Davis S.R."/>
            <person name="Walker R.L."/>
            <person name="Calzone K.A."/>
            <person name="Avital I."/>
            <person name="Heller T."/>
            <person name="Koh C."/>
            <person name="Pineda M."/>
            <person name="Rudloff U."/>
            <person name="Quezado M."/>
            <person name="Pichurin P.N."/>
            <person name="Hulick P.J."/>
            <person name="Weissman S.M."/>
            <person name="Newlin A."/>
            <person name="Rubinstein W.S."/>
            <person name="Sampson J.E."/>
            <person name="Hamman K."/>
            <person name="Goldgar D."/>
            <person name="Poplawski N."/>
            <person name="Phillips K."/>
            <person name="Schofield L."/>
            <person name="Armstrong J."/>
            <person name="Kiraly-Borri C."/>
            <person name="Suthers G.K."/>
            <person name="Huntsman D.G."/>
            <person name="Foulkes W.D."/>
            <person name="Carneiro F."/>
            <person name="Lindor N.M."/>
            <person name="Edwards S.L."/>
            <person name="French J.D."/>
            <person name="Waddell N."/>
            <person name="Meltzer P.S."/>
            <person name="Worthley D.L."/>
            <person name="Schrader K.A."/>
            <person name="Chenevix-Trench G."/>
        </authorList>
    </citation>
    <scope>INVOLVEMENT IN GAPPS</scope>
</reference>
<reference key="68">
    <citation type="journal article" date="2016" name="Gastrointest. Endosc.">
        <title>The first European family with gastric adenocarcinoma and proximal polyposis of the stomach: case report and review of the literature.</title>
        <authorList>
            <person name="Repak R."/>
            <person name="Kohoutova D."/>
            <person name="Podhola M."/>
            <person name="Rejchrt S."/>
            <person name="Minarik M."/>
            <person name="Benesova L."/>
            <person name="Lesko M."/>
            <person name="Bures J."/>
        </authorList>
    </citation>
    <scope>INVOLVEMENT IN GAPPS</scope>
</reference>
<reference key="69">
    <citation type="journal article" date="2018" name="Lancet Oncol.">
        <title>Spectrum and prevalence of genetic predisposition in medulloblastoma: a retrospective genetic study and prospective validation in a clinical trial cohort.</title>
        <authorList>
            <person name="Waszak S.M."/>
            <person name="Northcott P.A."/>
            <person name="Buchhalter I."/>
            <person name="Robinson G.W."/>
            <person name="Sutter C."/>
            <person name="Groebner S."/>
            <person name="Grund K.B."/>
            <person name="Brugieres L."/>
            <person name="Jones D.T.W."/>
            <person name="Pajtler K.W."/>
            <person name="Morrissy A.S."/>
            <person name="Kool M."/>
            <person name="Sturm D."/>
            <person name="Chavez L."/>
            <person name="Ernst A."/>
            <person name="Brabetz S."/>
            <person name="Hain M."/>
            <person name="Zichner T."/>
            <person name="Segura-Wang M."/>
            <person name="Weischenfeldt J."/>
            <person name="Rausch T."/>
            <person name="Mardin B.R."/>
            <person name="Zhou X."/>
            <person name="Baciu C."/>
            <person name="Lawerenz C."/>
            <person name="Chan J.A."/>
            <person name="Varlet P."/>
            <person name="Guerrini-Rousseau L."/>
            <person name="Fults D.W."/>
            <person name="Grajkowska W."/>
            <person name="Hauser P."/>
            <person name="Jabado N."/>
            <person name="Ra Y.S."/>
            <person name="Zitterbart K."/>
            <person name="Shringarpure S.S."/>
            <person name="De La Vega F.M."/>
            <person name="Bustamante C.D."/>
            <person name="Ng H.K."/>
            <person name="Perry A."/>
            <person name="MacDonald T.J."/>
            <person name="Hernaiz Driever P."/>
            <person name="Bendel A.E."/>
            <person name="Bowers D.C."/>
            <person name="McCowage G."/>
            <person name="Chintagumpala M.M."/>
            <person name="Cohn R."/>
            <person name="Hassall T."/>
            <person name="Fleischhack G."/>
            <person name="Eggen T."/>
            <person name="Wesenberg F."/>
            <person name="Feychting M."/>
            <person name="Lannering B."/>
            <person name="Schuez J."/>
            <person name="Johansen C."/>
            <person name="Andersen T.V."/>
            <person name="Roeoesli M."/>
            <person name="Kuehni C.E."/>
            <person name="Grotzer M."/>
            <person name="Kjaerheim K."/>
            <person name="Monoranu C.M."/>
            <person name="Archer T.C."/>
            <person name="Duke E."/>
            <person name="Pomeroy S.L."/>
            <person name="Shelagh R."/>
            <person name="Frank S."/>
            <person name="Sumerauer D."/>
            <person name="Scheurlen W."/>
            <person name="Ryzhova M.V."/>
            <person name="Milde T."/>
            <person name="Kratz C.P."/>
            <person name="Samuel D."/>
            <person name="Zhang J."/>
            <person name="Solomon D.A."/>
            <person name="Marra M."/>
            <person name="Eils R."/>
            <person name="Bartram C.R."/>
            <person name="von Hoff K."/>
            <person name="Rutkowski S."/>
            <person name="Ramaswamy V."/>
            <person name="Gilbertson R.J."/>
            <person name="Korshunov A."/>
            <person name="Taylor M.D."/>
            <person name="Lichter P."/>
            <person name="Malkin D."/>
            <person name="Gajjar A."/>
            <person name="Korbel J.O."/>
            <person name="Pfister S.M."/>
        </authorList>
    </citation>
    <scope>INVOLVEMENT IN MDB</scope>
</reference>
<reference key="70">
    <citation type="journal article" date="2021" name="Clin. J. Gastroenterol.">
        <title>Two Asian families with gastric adenocarcinoma and proximal polyposis of the stomach successfully treated via laparoscopic total gastrectomy.</title>
        <authorList>
            <person name="Kanemitsu K."/>
            <person name="Iwatsuki M."/>
            <person name="Yamashita K."/>
            <person name="Komohara Y."/>
            <person name="Morinaga T."/>
            <person name="Iwagami S."/>
            <person name="Eto K."/>
            <person name="Nagai Y."/>
            <person name="Kurashige J."/>
            <person name="Baba Y."/>
            <person name="Yoshida N."/>
            <person name="Baba H."/>
        </authorList>
    </citation>
    <scope>INVOLVEMENT IN GAPPS</scope>
</reference>
<proteinExistence type="evidence at protein level"/>
<gene>
    <name evidence="64" type="primary">APC</name>
    <name type="synonym">DP2.5</name>
</gene>
<dbReference type="EMBL" id="M73548">
    <property type="protein sequence ID" value="AAA60353.1"/>
    <property type="molecule type" value="mRNA"/>
</dbReference>
<dbReference type="EMBL" id="M73548">
    <property type="protein sequence ID" value="AAA60354.1"/>
    <property type="molecule type" value="mRNA"/>
</dbReference>
<dbReference type="EMBL" id="M74088">
    <property type="protein sequence ID" value="AAA03586.1"/>
    <property type="molecule type" value="mRNA"/>
</dbReference>
<dbReference type="EMBL" id="AC008575">
    <property type="status" value="NOT_ANNOTATED_CDS"/>
    <property type="molecule type" value="Genomic_DNA"/>
</dbReference>
<dbReference type="EMBL" id="AC136500">
    <property type="status" value="NOT_ANNOTATED_CDS"/>
    <property type="molecule type" value="Genomic_DNA"/>
</dbReference>
<dbReference type="EMBL" id="CH471086">
    <property type="protein sequence ID" value="EAW49002.1"/>
    <property type="molecule type" value="Genomic_DNA"/>
</dbReference>
<dbReference type="EMBL" id="CH471086">
    <property type="protein sequence ID" value="EAW49007.1"/>
    <property type="molecule type" value="Genomic_DNA"/>
</dbReference>
<dbReference type="EMBL" id="AK294544">
    <property type="protein sequence ID" value="BAH11802.1"/>
    <property type="molecule type" value="mRNA"/>
</dbReference>
<dbReference type="EMBL" id="S78214">
    <property type="protein sequence ID" value="AAB21145.2"/>
    <property type="status" value="ALT_SEQ"/>
    <property type="molecule type" value="Genomic_DNA"/>
</dbReference>
<dbReference type="CCDS" id="CCDS4107.1">
    <molecule id="P25054-1"/>
</dbReference>
<dbReference type="PIR" id="A37261">
    <property type="entry name" value="RBHUAP"/>
</dbReference>
<dbReference type="RefSeq" id="NP_000029.2">
    <molecule id="P25054-1"/>
    <property type="nucleotide sequence ID" value="NM_000038.5"/>
</dbReference>
<dbReference type="RefSeq" id="NP_001120982.1">
    <molecule id="P25054-1"/>
    <property type="nucleotide sequence ID" value="NM_001127510.3"/>
</dbReference>
<dbReference type="RefSeq" id="NP_001120983.2">
    <molecule id="P25054-3"/>
    <property type="nucleotide sequence ID" value="NM_001127511.3"/>
</dbReference>
<dbReference type="RefSeq" id="NP_001341824.1">
    <molecule id="P25054-1"/>
    <property type="nucleotide sequence ID" value="NM_001354895.2"/>
</dbReference>
<dbReference type="RefSeq" id="NP_001341832.1">
    <molecule id="P25054-2"/>
    <property type="nucleotide sequence ID" value="NM_001354903.2"/>
</dbReference>
<dbReference type="RefSeq" id="NP_001394379.1">
    <molecule id="P25054-1"/>
    <property type="nucleotide sequence ID" value="NM_001407450.1"/>
</dbReference>
<dbReference type="RefSeq" id="NP_001394387.1">
    <molecule id="P25054-2"/>
    <property type="nucleotide sequence ID" value="NM_001407458.1"/>
</dbReference>
<dbReference type="RefSeq" id="NP_001394388.1">
    <molecule id="P25054-2"/>
    <property type="nucleotide sequence ID" value="NM_001407459.1"/>
</dbReference>
<dbReference type="RefSeq" id="NP_001394389.1">
    <molecule id="P25054-2"/>
    <property type="nucleotide sequence ID" value="NM_001407460.1"/>
</dbReference>
<dbReference type="PDB" id="1DEB">
    <property type="method" value="X-ray"/>
    <property type="resolution" value="2.40 A"/>
    <property type="chains" value="A/B=2-55"/>
</dbReference>
<dbReference type="PDB" id="1EMU">
    <property type="method" value="X-ray"/>
    <property type="resolution" value="1.90 A"/>
    <property type="chains" value="B=2034-2049"/>
</dbReference>
<dbReference type="PDB" id="1JPP">
    <property type="method" value="X-ray"/>
    <property type="resolution" value="3.10 A"/>
    <property type="chains" value="C/D=1021-1035"/>
</dbReference>
<dbReference type="PDB" id="1M5I">
    <property type="method" value="X-ray"/>
    <property type="resolution" value="2.00 A"/>
    <property type="chains" value="A=126-250"/>
</dbReference>
<dbReference type="PDB" id="1T08">
    <property type="method" value="X-ray"/>
    <property type="resolution" value="2.10 A"/>
    <property type="chains" value="C=1484-1498"/>
</dbReference>
<dbReference type="PDB" id="1TH1">
    <property type="method" value="X-ray"/>
    <property type="resolution" value="2.50 A"/>
    <property type="chains" value="C/D=1362-1540"/>
</dbReference>
<dbReference type="PDB" id="1V18">
    <property type="method" value="X-ray"/>
    <property type="resolution" value="2.10 A"/>
    <property type="chains" value="B=1482-1528"/>
</dbReference>
<dbReference type="PDB" id="2RQU">
    <property type="method" value="NMR"/>
    <property type="chains" value="B=1578-1596"/>
</dbReference>
<dbReference type="PDB" id="3AU3">
    <property type="method" value="X-ray"/>
    <property type="resolution" value="2.10 A"/>
    <property type="chains" value="A=396-732"/>
</dbReference>
<dbReference type="PDB" id="3NMW">
    <property type="method" value="X-ray"/>
    <property type="resolution" value="1.60 A"/>
    <property type="chains" value="A/B=407-751"/>
</dbReference>
<dbReference type="PDB" id="3NMX">
    <property type="method" value="X-ray"/>
    <property type="resolution" value="2.30 A"/>
    <property type="chains" value="A/B/C=407-751"/>
</dbReference>
<dbReference type="PDB" id="3NMZ">
    <property type="method" value="X-ray"/>
    <property type="resolution" value="3.01 A"/>
    <property type="chains" value="A/B=303-739"/>
</dbReference>
<dbReference type="PDB" id="3QHE">
    <property type="method" value="X-ray"/>
    <property type="resolution" value="2.40 A"/>
    <property type="chains" value="A/C=396-732"/>
</dbReference>
<dbReference type="PDB" id="3RL7">
    <property type="method" value="X-ray"/>
    <property type="resolution" value="2.30 A"/>
    <property type="chains" value="G/H/I/J/K/L=2833-2843"/>
</dbReference>
<dbReference type="PDB" id="3RL8">
    <property type="method" value="X-ray"/>
    <property type="resolution" value="2.20 A"/>
    <property type="chains" value="F=2833-2843"/>
</dbReference>
<dbReference type="PDB" id="3T7U">
    <property type="method" value="X-ray"/>
    <property type="resolution" value="2.90 A"/>
    <property type="chains" value="A/B=407-775"/>
</dbReference>
<dbReference type="PDB" id="4G69">
    <property type="method" value="X-ray"/>
    <property type="resolution" value="2.00 A"/>
    <property type="chains" value="B=2833-2843"/>
</dbReference>
<dbReference type="PDB" id="4YJE">
    <property type="method" value="X-ray"/>
    <property type="resolution" value="1.90 A"/>
    <property type="chains" value="A=407-751"/>
</dbReference>
<dbReference type="PDB" id="4YJL">
    <property type="method" value="X-ray"/>
    <property type="resolution" value="2.10 A"/>
    <property type="chains" value="A/B/C/D/E/F=407-751"/>
</dbReference>
<dbReference type="PDB" id="4YK6">
    <property type="method" value="X-ray"/>
    <property type="resolution" value="1.70 A"/>
    <property type="chains" value="A=407-751"/>
</dbReference>
<dbReference type="PDB" id="5B6G">
    <property type="method" value="X-ray"/>
    <property type="resolution" value="1.99 A"/>
    <property type="chains" value="A=407-751"/>
</dbReference>
<dbReference type="PDB" id="5IZ6">
    <property type="method" value="X-ray"/>
    <property type="resolution" value="2.15 A"/>
    <property type="chains" value="A=407-751"/>
</dbReference>
<dbReference type="PDB" id="5IZ8">
    <property type="method" value="X-ray"/>
    <property type="resolution" value="3.06 A"/>
    <property type="chains" value="A/B=407-751"/>
</dbReference>
<dbReference type="PDB" id="5IZ9">
    <property type="method" value="X-ray"/>
    <property type="resolution" value="2.93 A"/>
    <property type="chains" value="A=407-751"/>
</dbReference>
<dbReference type="PDB" id="5IZA">
    <property type="method" value="X-ray"/>
    <property type="resolution" value="1.50 A"/>
    <property type="chains" value="A=407-751"/>
</dbReference>
<dbReference type="PDB" id="5Z8H">
    <property type="method" value="X-ray"/>
    <property type="resolution" value="1.79 A"/>
    <property type="chains" value="A=407-741"/>
</dbReference>
<dbReference type="PDB" id="7F6M">
    <property type="method" value="X-ray"/>
    <property type="resolution" value="2.40 A"/>
    <property type="chains" value="A=407-751"/>
</dbReference>
<dbReference type="PDB" id="7F7O">
    <property type="method" value="X-ray"/>
    <property type="resolution" value="2.80 A"/>
    <property type="chains" value="A=407-738"/>
</dbReference>
<dbReference type="PDB" id="7XTY">
    <property type="method" value="X-ray"/>
    <property type="resolution" value="2.10 A"/>
    <property type="chains" value="C/D=2833-2843"/>
</dbReference>
<dbReference type="PDB" id="8GSJ">
    <property type="method" value="X-ray"/>
    <property type="resolution" value="2.10 A"/>
    <property type="chains" value="A=407-738"/>
</dbReference>
<dbReference type="PDB" id="8X2Q">
    <property type="method" value="X-ray"/>
    <property type="resolution" value="2.00 A"/>
    <property type="chains" value="A=126-250"/>
</dbReference>
<dbReference type="PDBsum" id="1DEB"/>
<dbReference type="PDBsum" id="1EMU"/>
<dbReference type="PDBsum" id="1JPP"/>
<dbReference type="PDBsum" id="1M5I"/>
<dbReference type="PDBsum" id="1T08"/>
<dbReference type="PDBsum" id="1TH1"/>
<dbReference type="PDBsum" id="1V18"/>
<dbReference type="PDBsum" id="2RQU"/>
<dbReference type="PDBsum" id="3AU3"/>
<dbReference type="PDBsum" id="3NMW"/>
<dbReference type="PDBsum" id="3NMX"/>
<dbReference type="PDBsum" id="3NMZ"/>
<dbReference type="PDBsum" id="3QHE"/>
<dbReference type="PDBsum" id="3RL7"/>
<dbReference type="PDBsum" id="3RL8"/>
<dbReference type="PDBsum" id="3T7U"/>
<dbReference type="PDBsum" id="4G69"/>
<dbReference type="PDBsum" id="4YJE"/>
<dbReference type="PDBsum" id="4YJL"/>
<dbReference type="PDBsum" id="4YK6"/>
<dbReference type="PDBsum" id="5B6G"/>
<dbReference type="PDBsum" id="5IZ6"/>
<dbReference type="PDBsum" id="5IZ8"/>
<dbReference type="PDBsum" id="5IZ9"/>
<dbReference type="PDBsum" id="5IZA"/>
<dbReference type="PDBsum" id="5Z8H"/>
<dbReference type="PDBsum" id="7F6M"/>
<dbReference type="PDBsum" id="7F7O"/>
<dbReference type="PDBsum" id="7XTY"/>
<dbReference type="PDBsum" id="8GSJ"/>
<dbReference type="PDBsum" id="8X2Q"/>
<dbReference type="BMRB" id="P25054"/>
<dbReference type="SMR" id="P25054"/>
<dbReference type="BioGRID" id="106821">
    <property type="interactions" value="366"/>
</dbReference>
<dbReference type="ComplexPortal" id="CPX-107">
    <property type="entry name" value="Beta-catenin destruction core complex, APC-AXIN1-GSK3A variant"/>
</dbReference>
<dbReference type="ComplexPortal" id="CPX-109">
    <property type="entry name" value="Beta-catenin destruction core complex, APC-AXIN1-GSK3B variant"/>
</dbReference>
<dbReference type="ComplexPortal" id="CPX-439">
    <property type="entry name" value="Beta-catenin destruction core complex, APC-AXIN2-GSK3B variant"/>
</dbReference>
<dbReference type="ComplexPortal" id="CPX-441">
    <property type="entry name" value="Beta-catenin destruction core complex, APC-AXIN2-GSK3A variant"/>
</dbReference>
<dbReference type="CORUM" id="P25054"/>
<dbReference type="DIP" id="DIP-33556N"/>
<dbReference type="FunCoup" id="P25054">
    <property type="interactions" value="1537"/>
</dbReference>
<dbReference type="IntAct" id="P25054">
    <property type="interactions" value="259"/>
</dbReference>
<dbReference type="MINT" id="P25054"/>
<dbReference type="STRING" id="9606.ENSP00000257430"/>
<dbReference type="BindingDB" id="P25054"/>
<dbReference type="ChEMBL" id="CHEMBL3233"/>
<dbReference type="GlyCosmos" id="P25054">
    <property type="glycosylation" value="3 sites, 2 glycans"/>
</dbReference>
<dbReference type="GlyGen" id="P25054">
    <property type="glycosylation" value="9 sites, 3 N-linked glycans (3 sites), 1 O-linked glycan (4 sites)"/>
</dbReference>
<dbReference type="iPTMnet" id="P25054"/>
<dbReference type="PhosphoSitePlus" id="P25054"/>
<dbReference type="BioMuta" id="APC"/>
<dbReference type="DMDM" id="97535708"/>
<dbReference type="jPOST" id="P25054"/>
<dbReference type="MassIVE" id="P25054"/>
<dbReference type="PaxDb" id="9606-ENSP00000257430"/>
<dbReference type="PeptideAtlas" id="P25054"/>
<dbReference type="ProteomicsDB" id="54247">
    <molecule id="P25054-1"/>
</dbReference>
<dbReference type="ProteomicsDB" id="54248">
    <molecule id="P25054-2"/>
</dbReference>
<dbReference type="ProteomicsDB" id="6428"/>
<dbReference type="Pumba" id="P25054"/>
<dbReference type="Antibodypedia" id="1054">
    <property type="antibodies" value="757 antibodies from 45 providers"/>
</dbReference>
<dbReference type="DNASU" id="324"/>
<dbReference type="Ensembl" id="ENST00000257430.9">
    <molecule id="P25054-1"/>
    <property type="protein sequence ID" value="ENSP00000257430.4"/>
    <property type="gene ID" value="ENSG00000134982.19"/>
</dbReference>
<dbReference type="Ensembl" id="ENST00000507379.6">
    <molecule id="P25054-3"/>
    <property type="protein sequence ID" value="ENSP00000423224.2"/>
    <property type="gene ID" value="ENSG00000134982.19"/>
</dbReference>
<dbReference type="Ensembl" id="ENST00000508376.6">
    <molecule id="P25054-1"/>
    <property type="protein sequence ID" value="ENSP00000427089.2"/>
    <property type="gene ID" value="ENSG00000134982.19"/>
</dbReference>
<dbReference type="Ensembl" id="ENST00000509732.6">
    <molecule id="P25054-1"/>
    <property type="protein sequence ID" value="ENSP00000426541.2"/>
    <property type="gene ID" value="ENSG00000134982.19"/>
</dbReference>
<dbReference type="Ensembl" id="ENST00000512211.7">
    <molecule id="P25054-1"/>
    <property type="protein sequence ID" value="ENSP00000423828.3"/>
    <property type="gene ID" value="ENSG00000134982.19"/>
</dbReference>
<dbReference type="GeneID" id="324"/>
<dbReference type="KEGG" id="hsa:324"/>
<dbReference type="MANE-Select" id="ENST00000257430.9">
    <property type="protein sequence ID" value="ENSP00000257430.4"/>
    <property type="RefSeq nucleotide sequence ID" value="NM_000038.6"/>
    <property type="RefSeq protein sequence ID" value="NP_000029.2"/>
</dbReference>
<dbReference type="UCSC" id="uc003kpy.5">
    <molecule id="P25054-1"/>
    <property type="organism name" value="human"/>
</dbReference>
<dbReference type="UCSC" id="uc063gan.1">
    <property type="organism name" value="human"/>
</dbReference>
<dbReference type="AGR" id="HGNC:583"/>
<dbReference type="CTD" id="324"/>
<dbReference type="DisGeNET" id="324"/>
<dbReference type="GeneCards" id="APC"/>
<dbReference type="GeneReviews" id="APC"/>
<dbReference type="HGNC" id="HGNC:583">
    <property type="gene designation" value="APC"/>
</dbReference>
<dbReference type="HPA" id="ENSG00000134982">
    <property type="expression patterns" value="Tissue enhanced (brain)"/>
</dbReference>
<dbReference type="MalaCards" id="APC"/>
<dbReference type="MIM" id="114550">
    <property type="type" value="phenotype"/>
</dbReference>
<dbReference type="MIM" id="135290">
    <property type="type" value="phenotype"/>
</dbReference>
<dbReference type="MIM" id="155255">
    <property type="type" value="phenotype"/>
</dbReference>
<dbReference type="MIM" id="175100">
    <property type="type" value="phenotype"/>
</dbReference>
<dbReference type="MIM" id="611731">
    <property type="type" value="gene"/>
</dbReference>
<dbReference type="MIM" id="613659">
    <property type="type" value="phenotype"/>
</dbReference>
<dbReference type="MIM" id="619182">
    <property type="type" value="phenotype"/>
</dbReference>
<dbReference type="neXtProt" id="NX_P25054"/>
<dbReference type="OpenTargets" id="ENSG00000134982"/>
<dbReference type="Orphanet" id="247806">
    <property type="disease" value="APC-related attenuated familial adenomatous polyposis"/>
</dbReference>
<dbReference type="Orphanet" id="3258">
    <property type="disease" value="Cenani-Lenz syndrome"/>
</dbReference>
<dbReference type="Orphanet" id="873">
    <property type="disease" value="Desmoid tumor"/>
</dbReference>
<dbReference type="Orphanet" id="261584">
    <property type="disease" value="Familial adenomatous polyposis due to 5q22.2 microdeletion"/>
</dbReference>
<dbReference type="Orphanet" id="79665">
    <property type="disease" value="Gardner syndrome"/>
</dbReference>
<dbReference type="Orphanet" id="314022">
    <property type="disease" value="Gastric adenocarcinoma and proximal polyposis of the stomach"/>
</dbReference>
<dbReference type="Orphanet" id="99818">
    <property type="disease" value="Turcot syndrome with polyposis"/>
</dbReference>
<dbReference type="PharmGKB" id="PA24875"/>
<dbReference type="VEuPathDB" id="HostDB:ENSG00000134982"/>
<dbReference type="eggNOG" id="KOG2122">
    <property type="taxonomic scope" value="Eukaryota"/>
</dbReference>
<dbReference type="GeneTree" id="ENSGT00530000063749"/>
<dbReference type="HOGENOM" id="CLU_001012_0_0_1"/>
<dbReference type="InParanoid" id="P25054"/>
<dbReference type="OMA" id="DHEKHSP"/>
<dbReference type="OrthoDB" id="5918429at2759"/>
<dbReference type="PAN-GO" id="P25054">
    <property type="GO annotations" value="14 GO annotations based on evolutionary models"/>
</dbReference>
<dbReference type="PhylomeDB" id="P25054"/>
<dbReference type="TreeFam" id="TF106496"/>
<dbReference type="BioCyc" id="MetaCyc:ENSG00000134982-MONOMER"/>
<dbReference type="PathwayCommons" id="P25054"/>
<dbReference type="Reactome" id="R-HSA-111465">
    <property type="pathway name" value="Apoptotic cleavage of cellular proteins"/>
</dbReference>
<dbReference type="Reactome" id="R-HSA-195253">
    <property type="pathway name" value="Degradation of beta-catenin by the destruction complex"/>
</dbReference>
<dbReference type="Reactome" id="R-HSA-196299">
    <property type="pathway name" value="Beta-catenin phosphorylation cascade"/>
</dbReference>
<dbReference type="Reactome" id="R-HSA-3769402">
    <property type="pathway name" value="Deactivation of the beta-catenin transactivating complex"/>
</dbReference>
<dbReference type="Reactome" id="R-HSA-4641262">
    <property type="pathway name" value="Disassembly of the destruction complex and recruitment of AXIN to the membrane"/>
</dbReference>
<dbReference type="Reactome" id="R-HSA-5339716">
    <property type="pathway name" value="Signaling by GSK3beta mutants"/>
</dbReference>
<dbReference type="Reactome" id="R-HSA-5358747">
    <property type="pathway name" value="CTNNB1 S33 mutants aren't phosphorylated"/>
</dbReference>
<dbReference type="Reactome" id="R-HSA-5358749">
    <property type="pathway name" value="CTNNB1 S37 mutants aren't phosphorylated"/>
</dbReference>
<dbReference type="Reactome" id="R-HSA-5358751">
    <property type="pathway name" value="CTNNB1 S45 mutants aren't phosphorylated"/>
</dbReference>
<dbReference type="Reactome" id="R-HSA-5358752">
    <property type="pathway name" value="CTNNB1 T41 mutants aren't phosphorylated"/>
</dbReference>
<dbReference type="Reactome" id="R-HSA-5467333">
    <property type="pathway name" value="APC truncation mutants are not K63 polyubiquitinated"/>
</dbReference>
<dbReference type="Reactome" id="R-HSA-5467337">
    <property type="pathway name" value="APC truncation mutants have impaired AXIN binding"/>
</dbReference>
<dbReference type="Reactome" id="R-HSA-5467340">
    <property type="pathway name" value="AXIN missense mutants destabilize the destruction complex"/>
</dbReference>
<dbReference type="Reactome" id="R-HSA-5467348">
    <property type="pathway name" value="Truncations of AMER1 destabilize the destruction complex"/>
</dbReference>
<dbReference type="Reactome" id="R-HSA-5689896">
    <property type="pathway name" value="Ovarian tumor domain proteases"/>
</dbReference>
<dbReference type="SignaLink" id="P25054"/>
<dbReference type="SIGNOR" id="P25054"/>
<dbReference type="BioGRID-ORCS" id="324">
    <property type="hits" value="172 hits in 1170 CRISPR screens"/>
</dbReference>
<dbReference type="CD-CODE" id="8C2F96ED">
    <property type="entry name" value="Centrosome"/>
</dbReference>
<dbReference type="CD-CODE" id="D8D47D1F">
    <property type="entry name" value="Synthetic Condensate 000297"/>
</dbReference>
<dbReference type="CD-CODE" id="FB4E32DD">
    <property type="entry name" value="Presynaptic clusters and postsynaptic densities"/>
</dbReference>
<dbReference type="ChiTaRS" id="APC">
    <property type="organism name" value="human"/>
</dbReference>
<dbReference type="EvolutionaryTrace" id="P25054"/>
<dbReference type="GeneWiki" id="Adenomatous_polyposis_coli"/>
<dbReference type="GenomeRNAi" id="324"/>
<dbReference type="Pharos" id="P25054">
    <property type="development level" value="Tchem"/>
</dbReference>
<dbReference type="PRO" id="PR:P25054"/>
<dbReference type="Proteomes" id="UP000005640">
    <property type="component" value="Chromosome 5"/>
</dbReference>
<dbReference type="RNAct" id="P25054">
    <property type="molecule type" value="protein"/>
</dbReference>
<dbReference type="Bgee" id="ENSG00000134982">
    <property type="expression patterns" value="Expressed in substantia nigra pars compacta and 207 other cell types or tissues"/>
</dbReference>
<dbReference type="ExpressionAtlas" id="P25054">
    <property type="expression patterns" value="baseline and differential"/>
</dbReference>
<dbReference type="GO" id="GO:0005912">
    <property type="term" value="C:adherens junction"/>
    <property type="evidence" value="ECO:0007669"/>
    <property type="project" value="UniProtKB-SubCell"/>
</dbReference>
<dbReference type="GO" id="GO:0030877">
    <property type="term" value="C:beta-catenin destruction complex"/>
    <property type="evidence" value="ECO:0000314"/>
    <property type="project" value="UniProtKB"/>
</dbReference>
<dbReference type="GO" id="GO:0005923">
    <property type="term" value="C:bicellular tight junction"/>
    <property type="evidence" value="ECO:0000314"/>
    <property type="project" value="UniProtKB"/>
</dbReference>
<dbReference type="GO" id="GO:0016342">
    <property type="term" value="C:catenin complex"/>
    <property type="evidence" value="ECO:0000314"/>
    <property type="project" value="CACAO"/>
</dbReference>
<dbReference type="GO" id="GO:0005813">
    <property type="term" value="C:centrosome"/>
    <property type="evidence" value="ECO:0000314"/>
    <property type="project" value="UniProtKB"/>
</dbReference>
<dbReference type="GO" id="GO:0005737">
    <property type="term" value="C:cytoplasm"/>
    <property type="evidence" value="ECO:0000314"/>
    <property type="project" value="UniProtKB"/>
</dbReference>
<dbReference type="GO" id="GO:0005829">
    <property type="term" value="C:cytosol"/>
    <property type="evidence" value="ECO:0000304"/>
    <property type="project" value="Reactome"/>
</dbReference>
<dbReference type="GO" id="GO:0005794">
    <property type="term" value="C:Golgi apparatus"/>
    <property type="evidence" value="ECO:0000314"/>
    <property type="project" value="HPA"/>
</dbReference>
<dbReference type="GO" id="GO:0000776">
    <property type="term" value="C:kinetochore"/>
    <property type="evidence" value="ECO:0000314"/>
    <property type="project" value="UniProtKB"/>
</dbReference>
<dbReference type="GO" id="GO:0030027">
    <property type="term" value="C:lamellipodium"/>
    <property type="evidence" value="ECO:0000314"/>
    <property type="project" value="UniProtKB"/>
</dbReference>
<dbReference type="GO" id="GO:0016328">
    <property type="term" value="C:lateral plasma membrane"/>
    <property type="evidence" value="ECO:0000314"/>
    <property type="project" value="MGI"/>
</dbReference>
<dbReference type="GO" id="GO:0005874">
    <property type="term" value="C:microtubule"/>
    <property type="evidence" value="ECO:0007669"/>
    <property type="project" value="UniProtKB-KW"/>
</dbReference>
<dbReference type="GO" id="GO:0005654">
    <property type="term" value="C:nucleoplasm"/>
    <property type="evidence" value="ECO:0000304"/>
    <property type="project" value="Reactome"/>
</dbReference>
<dbReference type="GO" id="GO:0005634">
    <property type="term" value="C:nucleus"/>
    <property type="evidence" value="ECO:0000314"/>
    <property type="project" value="UniProtKB"/>
</dbReference>
<dbReference type="GO" id="GO:0048471">
    <property type="term" value="C:perinuclear region of cytoplasm"/>
    <property type="evidence" value="ECO:0000314"/>
    <property type="project" value="MGI"/>
</dbReference>
<dbReference type="GO" id="GO:0005886">
    <property type="term" value="C:plasma membrane"/>
    <property type="evidence" value="ECO:0000314"/>
    <property type="project" value="HPA"/>
</dbReference>
<dbReference type="GO" id="GO:0032587">
    <property type="term" value="C:ruffle membrane"/>
    <property type="evidence" value="ECO:0000314"/>
    <property type="project" value="UniProtKB"/>
</dbReference>
<dbReference type="GO" id="GO:1990909">
    <property type="term" value="C:Wnt signalosome"/>
    <property type="evidence" value="ECO:0000303"/>
    <property type="project" value="ParkinsonsUK-UCL"/>
</dbReference>
<dbReference type="GO" id="GO:0008013">
    <property type="term" value="F:beta-catenin binding"/>
    <property type="evidence" value="ECO:0000314"/>
    <property type="project" value="BHF-UCL"/>
</dbReference>
<dbReference type="GO" id="GO:0070840">
    <property type="term" value="F:dynein complex binding"/>
    <property type="evidence" value="ECO:0000353"/>
    <property type="project" value="CAFA"/>
</dbReference>
<dbReference type="GO" id="GO:0045295">
    <property type="term" value="F:gamma-catenin binding"/>
    <property type="evidence" value="ECO:0000353"/>
    <property type="project" value="BHF-UCL"/>
</dbReference>
<dbReference type="GO" id="GO:0008017">
    <property type="term" value="F:microtubule binding"/>
    <property type="evidence" value="ECO:0000314"/>
    <property type="project" value="UniProtKB"/>
</dbReference>
<dbReference type="GO" id="GO:0051010">
    <property type="term" value="F:microtubule plus-end binding"/>
    <property type="evidence" value="ECO:0000314"/>
    <property type="project" value="UniProtKB"/>
</dbReference>
<dbReference type="GO" id="GO:0019901">
    <property type="term" value="F:protein kinase binding"/>
    <property type="evidence" value="ECO:0000314"/>
    <property type="project" value="DisProt"/>
</dbReference>
<dbReference type="GO" id="GO:0019887">
    <property type="term" value="F:protein kinase regulator activity"/>
    <property type="evidence" value="ECO:0000314"/>
    <property type="project" value="UniProtKB"/>
</dbReference>
<dbReference type="GO" id="GO:0031625">
    <property type="term" value="F:ubiquitin protein ligase binding"/>
    <property type="evidence" value="ECO:0000314"/>
    <property type="project" value="MGI"/>
</dbReference>
<dbReference type="GO" id="GO:0070830">
    <property type="term" value="P:bicellular tight junction assembly"/>
    <property type="evidence" value="ECO:0000303"/>
    <property type="project" value="UniProtKB"/>
</dbReference>
<dbReference type="GO" id="GO:0007155">
    <property type="term" value="P:cell adhesion"/>
    <property type="evidence" value="ECO:0000303"/>
    <property type="project" value="UniProtKB"/>
</dbReference>
<dbReference type="GO" id="GO:0001708">
    <property type="term" value="P:cell fate specification"/>
    <property type="evidence" value="ECO:0000318"/>
    <property type="project" value="GO_Central"/>
</dbReference>
<dbReference type="GO" id="GO:0016477">
    <property type="term" value="P:cell migration"/>
    <property type="evidence" value="ECO:0000315"/>
    <property type="project" value="UniProtKB"/>
</dbReference>
<dbReference type="GO" id="GO:0006974">
    <property type="term" value="P:DNA damage response"/>
    <property type="evidence" value="ECO:0000314"/>
    <property type="project" value="UniProtKB"/>
</dbReference>
<dbReference type="GO" id="GO:0003203">
    <property type="term" value="P:endocardial cushion morphogenesis"/>
    <property type="evidence" value="ECO:0000250"/>
    <property type="project" value="BHF-UCL"/>
</dbReference>
<dbReference type="GO" id="GO:0003170">
    <property type="term" value="P:heart valve development"/>
    <property type="evidence" value="ECO:0000250"/>
    <property type="project" value="BHF-UCL"/>
</dbReference>
<dbReference type="GO" id="GO:0008286">
    <property type="term" value="P:insulin receptor signaling pathway"/>
    <property type="evidence" value="ECO:0000315"/>
    <property type="project" value="UniProtKB"/>
</dbReference>
<dbReference type="GO" id="GO:0000281">
    <property type="term" value="P:mitotic cytokinesis"/>
    <property type="evidence" value="ECO:0000315"/>
    <property type="project" value="MGI"/>
</dbReference>
<dbReference type="GO" id="GO:0007094">
    <property type="term" value="P:mitotic spindle assembly checkpoint signaling"/>
    <property type="evidence" value="ECO:0000315"/>
    <property type="project" value="MGI"/>
</dbReference>
<dbReference type="GO" id="GO:0090090">
    <property type="term" value="P:negative regulation of canonical Wnt signaling pathway"/>
    <property type="evidence" value="ECO:0000315"/>
    <property type="project" value="UniProtKB"/>
</dbReference>
<dbReference type="GO" id="GO:1902807">
    <property type="term" value="P:negative regulation of cell cycle G1/S phase transition"/>
    <property type="evidence" value="ECO:0000314"/>
    <property type="project" value="UniProtKB"/>
</dbReference>
<dbReference type="GO" id="GO:0008285">
    <property type="term" value="P:negative regulation of cell population proliferation"/>
    <property type="evidence" value="ECO:0000314"/>
    <property type="project" value="UniProtKB"/>
</dbReference>
<dbReference type="GO" id="GO:0045736">
    <property type="term" value="P:negative regulation of cyclin-dependent protein serine/threonine kinase activity"/>
    <property type="evidence" value="ECO:0000314"/>
    <property type="project" value="UniProtKB"/>
</dbReference>
<dbReference type="GO" id="GO:2000134">
    <property type="term" value="P:negative regulation of G1/S transition of mitotic cell cycle"/>
    <property type="evidence" value="ECO:0000315"/>
    <property type="project" value="UniProtKB"/>
</dbReference>
<dbReference type="GO" id="GO:0007026">
    <property type="term" value="P:negative regulation of microtubule depolymerization"/>
    <property type="evidence" value="ECO:0000314"/>
    <property type="project" value="UniProtKB"/>
</dbReference>
<dbReference type="GO" id="GO:0007399">
    <property type="term" value="P:nervous system development"/>
    <property type="evidence" value="ECO:0000318"/>
    <property type="project" value="GO_Central"/>
</dbReference>
<dbReference type="GO" id="GO:0007389">
    <property type="term" value="P:pattern specification process"/>
    <property type="evidence" value="ECO:0000318"/>
    <property type="project" value="GO_Central"/>
</dbReference>
<dbReference type="GO" id="GO:0043065">
    <property type="term" value="P:positive regulation of apoptotic process"/>
    <property type="evidence" value="ECO:0000315"/>
    <property type="project" value="MGI"/>
</dbReference>
<dbReference type="GO" id="GO:0030335">
    <property type="term" value="P:positive regulation of cell migration"/>
    <property type="evidence" value="ECO:0000315"/>
    <property type="project" value="MGI"/>
</dbReference>
<dbReference type="GO" id="GO:0120162">
    <property type="term" value="P:positive regulation of cold-induced thermogenesis"/>
    <property type="evidence" value="ECO:0000250"/>
    <property type="project" value="YuBioLab"/>
</dbReference>
<dbReference type="GO" id="GO:0045732">
    <property type="term" value="P:positive regulation of protein catabolic process"/>
    <property type="evidence" value="ECO:0000316"/>
    <property type="project" value="MGI"/>
</dbReference>
<dbReference type="GO" id="GO:1904781">
    <property type="term" value="P:positive regulation of protein localization to centrosome"/>
    <property type="evidence" value="ECO:0000315"/>
    <property type="project" value="CAFA"/>
</dbReference>
<dbReference type="GO" id="GO:0031274">
    <property type="term" value="P:positive regulation of pseudopodium assembly"/>
    <property type="evidence" value="ECO:0000315"/>
    <property type="project" value="MGI"/>
</dbReference>
<dbReference type="GO" id="GO:0043161">
    <property type="term" value="P:proteasome-mediated ubiquitin-dependent protein catabolic process"/>
    <property type="evidence" value="ECO:0000303"/>
    <property type="project" value="ComplexPortal"/>
</dbReference>
<dbReference type="GO" id="GO:0065003">
    <property type="term" value="P:protein-containing complex assembly"/>
    <property type="evidence" value="ECO:0000314"/>
    <property type="project" value="UniProtKB"/>
</dbReference>
<dbReference type="GO" id="GO:0051988">
    <property type="term" value="P:regulation of attachment of spindle microtubules to kinetochore"/>
    <property type="evidence" value="ECO:0000315"/>
    <property type="project" value="MGI"/>
</dbReference>
<dbReference type="GO" id="GO:0060632">
    <property type="term" value="P:regulation of microtubule-based movement"/>
    <property type="evidence" value="ECO:0000270"/>
    <property type="project" value="UniProtKB"/>
</dbReference>
<dbReference type="GO" id="GO:0032886">
    <property type="term" value="P:regulation of microtubule-based process"/>
    <property type="evidence" value="ECO:0000315"/>
    <property type="project" value="UniProtKB"/>
</dbReference>
<dbReference type="GO" id="GO:0016055">
    <property type="term" value="P:Wnt signaling pathway"/>
    <property type="evidence" value="ECO:0007669"/>
    <property type="project" value="UniProtKB-KW"/>
</dbReference>
<dbReference type="DisProt" id="DP00519"/>
<dbReference type="FunFam" id="1.25.10.10:FF:000035">
    <property type="entry name" value="adenomatous polyposis coli protein 2"/>
    <property type="match status" value="1"/>
</dbReference>
<dbReference type="FunFam" id="1.10.287.450:FF:000001">
    <property type="entry name" value="adenomatous polyposis coli protein isoform X1"/>
    <property type="match status" value="1"/>
</dbReference>
<dbReference type="Gene3D" id="1.20.5.10">
    <property type="match status" value="1"/>
</dbReference>
<dbReference type="Gene3D" id="1.10.287.450">
    <property type="entry name" value="Helix hairpin bin"/>
    <property type="match status" value="1"/>
</dbReference>
<dbReference type="Gene3D" id="1.25.10.10">
    <property type="entry name" value="Leucine-rich Repeat Variant"/>
    <property type="match status" value="1"/>
</dbReference>
<dbReference type="IDEAL" id="IID00035"/>
<dbReference type="InterPro" id="IPR009240">
    <property type="entry name" value="APC_15aa_rpt"/>
</dbReference>
<dbReference type="InterPro" id="IPR009234">
    <property type="entry name" value="APC_basic_dom"/>
</dbReference>
<dbReference type="InterPro" id="IPR026831">
    <property type="entry name" value="APC_dom"/>
</dbReference>
<dbReference type="InterPro" id="IPR026818">
    <property type="entry name" value="Apc_fam"/>
</dbReference>
<dbReference type="InterPro" id="IPR032038">
    <property type="entry name" value="APC_N"/>
</dbReference>
<dbReference type="InterPro" id="IPR036149">
    <property type="entry name" value="APC_N_sf"/>
</dbReference>
<dbReference type="InterPro" id="IPR041257">
    <property type="entry name" value="APC_rep"/>
</dbReference>
<dbReference type="InterPro" id="IPR009223">
    <property type="entry name" value="APC_rpt"/>
</dbReference>
<dbReference type="InterPro" id="IPR011989">
    <property type="entry name" value="ARM-like"/>
</dbReference>
<dbReference type="InterPro" id="IPR016024">
    <property type="entry name" value="ARM-type_fold"/>
</dbReference>
<dbReference type="InterPro" id="IPR000225">
    <property type="entry name" value="Armadillo"/>
</dbReference>
<dbReference type="InterPro" id="IPR009232">
    <property type="entry name" value="EB1-bd"/>
</dbReference>
<dbReference type="InterPro" id="IPR009224">
    <property type="entry name" value="SAMP"/>
</dbReference>
<dbReference type="PANTHER" id="PTHR12607:SF11">
    <property type="entry name" value="ADENOMATOUS POLYPOSIS COLI PROTEIN"/>
    <property type="match status" value="1"/>
</dbReference>
<dbReference type="PANTHER" id="PTHR12607">
    <property type="entry name" value="ADENOMATOUS POLYPOSIS COLI PROTEIN FAMILY"/>
    <property type="match status" value="1"/>
</dbReference>
<dbReference type="Pfam" id="PF05972">
    <property type="entry name" value="APC_15aa"/>
    <property type="match status" value="4"/>
</dbReference>
<dbReference type="Pfam" id="PF05956">
    <property type="entry name" value="APC_basic"/>
    <property type="match status" value="1"/>
</dbReference>
<dbReference type="Pfam" id="PF16689">
    <property type="entry name" value="APC_N_CC"/>
    <property type="match status" value="1"/>
</dbReference>
<dbReference type="Pfam" id="PF05923">
    <property type="entry name" value="APC_r"/>
    <property type="match status" value="7"/>
</dbReference>
<dbReference type="Pfam" id="PF18797">
    <property type="entry name" value="APC_rep"/>
    <property type="match status" value="1"/>
</dbReference>
<dbReference type="Pfam" id="PF16634">
    <property type="entry name" value="APC_u13"/>
    <property type="match status" value="1"/>
</dbReference>
<dbReference type="Pfam" id="PF16635">
    <property type="entry name" value="APC_u14"/>
    <property type="match status" value="1"/>
</dbReference>
<dbReference type="Pfam" id="PF16636">
    <property type="entry name" value="APC_u15"/>
    <property type="match status" value="1"/>
</dbReference>
<dbReference type="Pfam" id="PF16630">
    <property type="entry name" value="APC_u5"/>
    <property type="match status" value="1"/>
</dbReference>
<dbReference type="Pfam" id="PF16633">
    <property type="entry name" value="APC_u9"/>
    <property type="match status" value="1"/>
</dbReference>
<dbReference type="Pfam" id="PF00514">
    <property type="entry name" value="Arm"/>
    <property type="match status" value="3"/>
</dbReference>
<dbReference type="Pfam" id="PF16629">
    <property type="entry name" value="Arm_APC_u3"/>
    <property type="match status" value="1"/>
</dbReference>
<dbReference type="Pfam" id="PF05937">
    <property type="entry name" value="EB1_binding"/>
    <property type="match status" value="1"/>
</dbReference>
<dbReference type="Pfam" id="PF05924">
    <property type="entry name" value="SAMP"/>
    <property type="match status" value="3"/>
</dbReference>
<dbReference type="Pfam" id="PF11414">
    <property type="entry name" value="Suppressor_APC"/>
    <property type="match status" value="1"/>
</dbReference>
<dbReference type="SMART" id="SM00185">
    <property type="entry name" value="ARM"/>
    <property type="match status" value="7"/>
</dbReference>
<dbReference type="SUPFAM" id="SSF48371">
    <property type="entry name" value="ARM repeat"/>
    <property type="match status" value="1"/>
</dbReference>
<dbReference type="SUPFAM" id="SSF58050">
    <property type="entry name" value="N-terminal coiled coil domain from apc"/>
    <property type="match status" value="1"/>
</dbReference>
<dbReference type="SUPFAM" id="SSF82931">
    <property type="entry name" value="Tumor suppressor gene product Apc"/>
    <property type="match status" value="1"/>
</dbReference>
<dbReference type="PROSITE" id="PS50176">
    <property type="entry name" value="ARM_REPEAT"/>
    <property type="match status" value="1"/>
</dbReference>
<sequence>MAAASYDQLLKQVEALKMENSNLRQELEDNSNHLTKLETEASNMKEVLKQLQGSIEDEAMASSGQIDLLERLKELNLDSSNFPGVKLRSKMSLRSYGSREGSVSSRSGECSPVPMGSFPRRGFVNGSRESTGYLEELEKERSLLLADLDKEEKEKDWYYAQLQNLTKRIDSLPLTENFSLQTDMTRRQLEYEARQIRVAMEEQLGTCQDMEKRAQRRIARIQQIEKDILRIRQLLQSQATEAERSSQNKHETGSHDAERQNEGQGVGEINMATSGNGQGSTTRMDHETASVLSSSSTHSAPRRLTSHLGTKVEMVYSLLSMLGTHDKDDMSRTLLAMSSSQDSCISMRQSGCLPLLIQLLHGNDKDSVLLGNSRGSKEARARASAALHNIIHSQPDDKRGRREIRVLHLLEQIRAYCETCWEWQEAHEPGMDQDKNPMPAPVEHQICPAVCVLMKLSFDEEHRHAMNELGGLQAIAELLQVDCEMYGLTNDHYSITLRRYAGMALTNLTFGDVANKATLCSMKGCMRALVAQLKSESEDLQQVIASVLRNLSWRADVNSKKTLREVGSVKALMECALEVKKESTLKSVLSALWNLSAHCTENKADICAVDGALAFLVGTLTYRSQTNTLAIIESGGGILRNVSSLIATNEDHRQILRENNCLQTLLQHLKSHSLTIVSNACGTLWNLSARNPKDQEALWDMGAVSMLKNLIHSKHKMIAMGSAAALRNLMANRPAKYKDANIMSPGSSLPSLHVRKQKALEAELDAQHLSETFDNIDNLSPKASHRSKQRHKQSLYGDYVFDTNRHDDNRSDNFNTGNMTVLSPYLNTTVLPSSSSSRGSLDSSRSEKDRSLERERGIGLGNYHPATENPGTSSKRGLQISTTAAQIAKVMEEVSAIHTSQEDRSSGSTTELHCVTDERNALRRSSAAHTHSNTYNFTKSENSNRTCSMPYAKLEYKRSSNDSLNSVSSSDGYGKRGQMKPSIESYSEDDESKFCSYGQYPADLAHKIHSANHMDDNDGELDTPINYSLKYSDEQLNSGRQSPSQNERWARPKHIIEDEIKQSEQRQSRNQSTTYPVYTESTDDKHLKFQPHFGQQECVSPYRSRGANGSETNRVGSNHGINQNVSQSLCQEDDYEDDKPTNYSERYSEEEQHEEEERPTNYSIKYNEEKRHVDQPIDYSLKYATDIPSSQKQSFSFSKSSSGQSSKTEHMSSSSENTSTPSSNAKRQNQLHPSSAQSRSGQPQKAATCKVSSINQETIQTYCVEDTPICFSRCSSLSSLSSAEDEIGCNQTTQEADSANTLQIAEIKEKIGTRSAEDPVSEVPAVSQHPRTKSSRLQGSSLSSESARHKAVEFSSGAKSPSKSGAQTPKSPPEHYVQETPLMFSRCTSVSSLDSFESRSIASSVQSEPCSGMVSGIISPSDLPDSPGQTMPPSRSKTPPPPPQTAQTKREVPKNKAPTAEKRESGPKQAAVNAAVQRVQVLPDADTLLHFATESTPDGFSCSSSLSALSLDEPFIQKDVELRIMPPVQENDNGNETESEQPKESNENQEKEAEKTIDSEKDLLDDSDDDDIEILEECIISAMPTKSSRKAKKPAQTASKLPPPVARKPSQLPVYKLLPSQNRLQPQKHVSFTPGDDMPRVYCVEGTPINFSTATSLSDLTIESPPNELAAGEGVRGGAQSGEFEKRDTIPTEGRSTDEAQGGKTSSVTIPELDDNKAEEGDILAECINSAMPKGKSHKPFRVKKIMDQVQQASASSSAPNKNQLDGKKKKPTSPVKPIPQNTEYRTRVRKNADSKNNLNAERVFSDNKDSKKQNLKNNSKVFNDKLPNNEDRVRGSFAFDSPHHYTPIEGTPYCFSRNDSLSSLDFDDDDVDLSREKAELRKAKENKESEAKVTSHTELTSNQQSANKTQAIAKQPINRGQPKPILQKQSTFPQSSKDIPDRGAATDEKLQNFAIENTPVCFSHNSSLSSLSDIDQENNNKENEPIKETEPPDSQGEPSKPQASGYAPKSFHVEDTPVCFSRNSSLSSLSIDSEDDLLQECISSAMPKKKKPSRLKGDNEKHSPRNMGGILGEDLTLDLKDIQRPDSEHGLSPDSENFDWKAIQEGANSIVSSLHQAAAAACLSRQASSDSDSILSLKSGISLGSPFHLTPDQEEKPFTSNKGPRILKPGEKSTLETKKIESESKGIKGGKKVYKSLITGKVRSNSEISGQMKQPLQANMPSISRGRTMIHIPGVRNSSSSTSPVSKKGPPLKTPASKSPSEGQTATTSPRGAKPSVKSELSPVARQTSQIGGSSKAPSRSGSRDSTPSRPAQQPLSRPIQSPGRNSISPGRNGISPPNKLSQLPRTSSPSTASTKSSGSGKMSYTSPGRQMSQQNLTKQTGLSKNASSIPRSESASKGLNQMNNGNGANKKVELSRMSSTKSSGSESDRSERPVLVRQSTFIKEAPSPTLRRKLEESASFESLSPSSRPASPTRSQAQTPVLSPSLPDMSLSTHSSVQAGGWRKLPPNLSPTIEYNDGRPAKRHDIARSHSESPSRLPINRSGTWKREHSKHSSSLPRVSTWRRTGSSSSILSASSESSEKAKSEDEKHVNSISGTKQSKENQVSAKGTWRKIKENEFSPTNSTSQTVSSGATNGAESKTLIYQMAPAVSKTEDVWVRIEDCPINNPRSGRSPTGNTPPVIDSVSEKANPNIKDSKDNQAKQNVGNGSVPMRTVGLENRLNSFIQVDAPDQKGTEIKPGQNNPVPVSETNESSIVERTPFSSSSSSKHSSPSGTVAARVTPFNYNPSPRKSSADSTSARPSQIPTPVNNNTKKRDSKTDSTESSGTQSPKRHSGSYLVTSV</sequence>
<feature type="initiator methionine" description="Removed" evidence="69">
    <location>
        <position position="1"/>
    </location>
</feature>
<feature type="chain" id="PRO_0000064627" description="Adenomatous polyposis coli protein">
    <location>
        <begin position="2"/>
        <end position="2843"/>
    </location>
</feature>
<feature type="repeat" description="ARM 1">
    <location>
        <begin position="453"/>
        <end position="495"/>
    </location>
</feature>
<feature type="repeat" description="ARM 2">
    <location>
        <begin position="505"/>
        <end position="547"/>
    </location>
</feature>
<feature type="repeat" description="ARM 3">
    <location>
        <begin position="548"/>
        <end position="591"/>
    </location>
</feature>
<feature type="repeat" description="ARM 4">
    <location>
        <begin position="592"/>
        <end position="638"/>
    </location>
</feature>
<feature type="repeat" description="ARM 5">
    <location>
        <begin position="639"/>
        <end position="683"/>
    </location>
</feature>
<feature type="repeat" description="ARM 6">
    <location>
        <begin position="684"/>
        <end position="725"/>
    </location>
</feature>
<feature type="repeat" description="ARM 7">
    <location>
        <begin position="726"/>
        <end position="767"/>
    </location>
</feature>
<feature type="region of interest" description="Disordered" evidence="5">
    <location>
        <begin position="239"/>
        <end position="305"/>
    </location>
</feature>
<feature type="region of interest" description="Disordered" evidence="5">
    <location>
        <begin position="828"/>
        <end position="878"/>
    </location>
</feature>
<feature type="region of interest" description="Disordered" evidence="5">
    <location>
        <begin position="923"/>
        <end position="943"/>
    </location>
</feature>
<feature type="region of interest" description="Disordered" evidence="5">
    <location>
        <begin position="958"/>
        <end position="987"/>
    </location>
</feature>
<feature type="region of interest" description="Responsible for down-regulation through a process mediated by direct ubiquitination">
    <location>
        <begin position="960"/>
        <end position="1337"/>
    </location>
</feature>
<feature type="region of interest" description="Interaction with catenins" evidence="47">
    <location>
        <begin position="1020"/>
        <end position="1169"/>
    </location>
</feature>
<feature type="region of interest" description="Disordered" evidence="5">
    <location>
        <begin position="1099"/>
        <end position="1169"/>
    </location>
</feature>
<feature type="region of interest" description="Disordered" evidence="5">
    <location>
        <begin position="1190"/>
        <end position="1244"/>
    </location>
</feature>
<feature type="region of interest" description="Disordered" evidence="5">
    <location>
        <begin position="1311"/>
        <end position="1376"/>
    </location>
</feature>
<feature type="region of interest" description="Disordered" evidence="5">
    <location>
        <begin position="1403"/>
        <end position="1475"/>
    </location>
</feature>
<feature type="region of interest" description="Disordered" evidence="5">
    <location>
        <begin position="1526"/>
        <end position="1569"/>
    </location>
</feature>
<feature type="region of interest" description="Disordered" evidence="5">
    <location>
        <begin position="1583"/>
        <end position="1611"/>
    </location>
</feature>
<feature type="region of interest" description="Disordered" evidence="5">
    <location>
        <begin position="1664"/>
        <end position="1717"/>
    </location>
</feature>
<feature type="region of interest" description="Disordered" evidence="5">
    <location>
        <begin position="1729"/>
        <end position="1836"/>
    </location>
</feature>
<feature type="region of interest" description="Highly charged">
    <location>
        <begin position="1866"/>
        <end position="1893"/>
    </location>
</feature>
<feature type="region of interest" description="Disordered" evidence="5">
    <location>
        <begin position="1881"/>
        <end position="1950"/>
    </location>
</feature>
<feature type="region of interest" description="Disordered" evidence="5">
    <location>
        <begin position="1965"/>
        <end position="2011"/>
    </location>
</feature>
<feature type="region of interest" description="Interaction with AXIN1" evidence="9">
    <location>
        <begin position="2035"/>
        <end position="2059"/>
    </location>
</feature>
<feature type="region of interest" description="Disordered" evidence="5">
    <location>
        <begin position="2043"/>
        <end position="2072"/>
    </location>
</feature>
<feature type="region of interest" description="Disordered" evidence="5">
    <location>
        <begin position="2147"/>
        <end position="2635"/>
    </location>
</feature>
<feature type="region of interest" description="Basic region" evidence="24">
    <location>
        <begin position="2167"/>
        <end position="2674"/>
    </location>
</feature>
<feature type="region of interest" description="Interaction with DLG1" evidence="48">
    <location>
        <begin position="2475"/>
        <end position="2843"/>
    </location>
</feature>
<feature type="region of interest" description="Disordered" evidence="5">
    <location>
        <begin position="2667"/>
        <end position="2714"/>
    </location>
</feature>
<feature type="region of interest" description="Interaction with MAPRE1" evidence="24">
    <location>
        <begin position="2674"/>
        <end position="2843"/>
    </location>
</feature>
<feature type="region of interest" description="Disordered" evidence="5">
    <location>
        <begin position="2729"/>
        <end position="2843"/>
    </location>
</feature>
<feature type="coiled-coil region" evidence="4">
    <location>
        <begin position="2"/>
        <end position="61"/>
    </location>
</feature>
<feature type="coiled-coil region" evidence="4">
    <location>
        <begin position="127"/>
        <end position="248"/>
    </location>
</feature>
<feature type="short sequence motif" description="Microtubule tip localization signal">
    <location>
        <begin position="2803"/>
        <end position="2806"/>
    </location>
</feature>
<feature type="short sequence motif" description="PDZ-binding">
    <location>
        <begin position="2841"/>
        <end position="2843"/>
    </location>
</feature>
<feature type="compositionally biased region" description="Basic and acidic residues" evidence="5">
    <location>
        <begin position="241"/>
        <end position="261"/>
    </location>
</feature>
<feature type="compositionally biased region" description="Polar residues" evidence="5">
    <location>
        <begin position="271"/>
        <end position="282"/>
    </location>
</feature>
<feature type="compositionally biased region" description="Low complexity" evidence="5">
    <location>
        <begin position="290"/>
        <end position="299"/>
    </location>
</feature>
<feature type="compositionally biased region" description="Low complexity" evidence="5">
    <location>
        <begin position="833"/>
        <end position="843"/>
    </location>
</feature>
<feature type="compositionally biased region" description="Basic and acidic residues" evidence="5">
    <location>
        <begin position="844"/>
        <end position="857"/>
    </location>
</feature>
<feature type="compositionally biased region" description="Polar residues" evidence="5">
    <location>
        <begin position="869"/>
        <end position="878"/>
    </location>
</feature>
<feature type="compositionally biased region" description="Polar residues" evidence="5">
    <location>
        <begin position="927"/>
        <end position="943"/>
    </location>
</feature>
<feature type="compositionally biased region" description="Low complexity" evidence="5">
    <location>
        <begin position="961"/>
        <end position="971"/>
    </location>
</feature>
<feature type="compositionally biased region" description="Polar residues" evidence="5">
    <location>
        <begin position="1107"/>
        <end position="1130"/>
    </location>
</feature>
<feature type="compositionally biased region" description="Basic and acidic residues" evidence="5">
    <location>
        <begin position="1146"/>
        <end position="1159"/>
    </location>
</feature>
<feature type="compositionally biased region" description="Low complexity" evidence="5">
    <location>
        <begin position="1190"/>
        <end position="1224"/>
    </location>
</feature>
<feature type="compositionally biased region" description="Polar residues" evidence="5">
    <location>
        <begin position="1225"/>
        <end position="1244"/>
    </location>
</feature>
<feature type="compositionally biased region" description="Low complexity" evidence="5">
    <location>
        <begin position="1335"/>
        <end position="1345"/>
    </location>
</feature>
<feature type="compositionally biased region" description="Low complexity" evidence="5">
    <location>
        <begin position="1355"/>
        <end position="1366"/>
    </location>
</feature>
<feature type="compositionally biased region" description="Basic and acidic residues" evidence="5">
    <location>
        <begin position="1448"/>
        <end position="1466"/>
    </location>
</feature>
<feature type="compositionally biased region" description="Basic and acidic residues" evidence="5">
    <location>
        <begin position="1540"/>
        <end position="1564"/>
    </location>
</feature>
<feature type="compositionally biased region" description="Basic and acidic residues" evidence="5">
    <location>
        <begin position="1683"/>
        <end position="1698"/>
    </location>
</feature>
<feature type="compositionally biased region" description="Basic residues" evidence="5">
    <location>
        <begin position="1735"/>
        <end position="1744"/>
    </location>
</feature>
<feature type="compositionally biased region" description="Basic and acidic residues" evidence="5">
    <location>
        <begin position="1785"/>
        <end position="1794"/>
    </location>
</feature>
<feature type="compositionally biased region" description="Basic and acidic residues" evidence="5">
    <location>
        <begin position="1804"/>
        <end position="1813"/>
    </location>
</feature>
<feature type="compositionally biased region" description="Basic and acidic residues" evidence="5">
    <location>
        <begin position="1881"/>
        <end position="1896"/>
    </location>
</feature>
<feature type="compositionally biased region" description="Polar residues" evidence="5">
    <location>
        <begin position="1897"/>
        <end position="1913"/>
    </location>
</feature>
<feature type="compositionally biased region" description="Polar residues" evidence="5">
    <location>
        <begin position="1928"/>
        <end position="1938"/>
    </location>
</feature>
<feature type="compositionally biased region" description="Basic and acidic residues" evidence="5">
    <location>
        <begin position="1939"/>
        <end position="1950"/>
    </location>
</feature>
<feature type="compositionally biased region" description="Basic and acidic residues" evidence="5">
    <location>
        <begin position="1979"/>
        <end position="1991"/>
    </location>
</feature>
<feature type="compositionally biased region" description="Basic and acidic residues" evidence="5">
    <location>
        <begin position="2169"/>
        <end position="2187"/>
    </location>
</feature>
<feature type="compositionally biased region" description="Polar residues" evidence="5">
    <location>
        <begin position="2203"/>
        <end position="2223"/>
    </location>
</feature>
<feature type="compositionally biased region" description="Polar residues" evidence="5">
    <location>
        <begin position="2257"/>
        <end position="2271"/>
    </location>
</feature>
<feature type="compositionally biased region" description="Polar residues" evidence="5">
    <location>
        <begin position="2286"/>
        <end position="2331"/>
    </location>
</feature>
<feature type="compositionally biased region" description="Low complexity" evidence="5">
    <location>
        <begin position="2348"/>
        <end position="2369"/>
    </location>
</feature>
<feature type="compositionally biased region" description="Polar residues" evidence="5">
    <location>
        <begin position="2370"/>
        <end position="2409"/>
    </location>
</feature>
<feature type="compositionally biased region" description="Polar residues" evidence="5">
    <location>
        <begin position="2418"/>
        <end position="2427"/>
    </location>
</feature>
<feature type="compositionally biased region" description="Low complexity" evidence="5">
    <location>
        <begin position="2459"/>
        <end position="2477"/>
    </location>
</feature>
<feature type="compositionally biased region" description="Basic and acidic residues" evidence="5">
    <location>
        <begin position="2518"/>
        <end position="2535"/>
    </location>
</feature>
<feature type="compositionally biased region" description="Polar residues" evidence="5">
    <location>
        <begin position="2555"/>
        <end position="2568"/>
    </location>
</feature>
<feature type="compositionally biased region" description="Low complexity" evidence="5">
    <location>
        <begin position="2569"/>
        <end position="2579"/>
    </location>
</feature>
<feature type="compositionally biased region" description="Basic and acidic residues" evidence="5">
    <location>
        <begin position="2580"/>
        <end position="2592"/>
    </location>
</feature>
<feature type="compositionally biased region" description="Polar residues" evidence="5">
    <location>
        <begin position="2593"/>
        <end position="2608"/>
    </location>
</feature>
<feature type="compositionally biased region" description="Polar residues" evidence="5">
    <location>
        <begin position="2620"/>
        <end position="2635"/>
    </location>
</feature>
<feature type="compositionally biased region" description="Polar residues" evidence="5">
    <location>
        <begin position="2668"/>
        <end position="2679"/>
    </location>
</feature>
<feature type="compositionally biased region" description="Polar residues" evidence="5">
    <location>
        <begin position="2741"/>
        <end position="2757"/>
    </location>
</feature>
<feature type="compositionally biased region" description="Low complexity" evidence="5">
    <location>
        <begin position="2763"/>
        <end position="2774"/>
    </location>
</feature>
<feature type="compositionally biased region" description="Polar residues" evidence="5">
    <location>
        <begin position="2784"/>
        <end position="2812"/>
    </location>
</feature>
<feature type="modified residue" description="N-acetylalanine" evidence="69">
    <location>
        <position position="2"/>
    </location>
</feature>
<feature type="modified residue" description="Phosphoserine" evidence="3">
    <location>
        <position position="107"/>
    </location>
</feature>
<feature type="modified residue" description="Phosphoserine" evidence="3">
    <location>
        <position position="111"/>
    </location>
</feature>
<feature type="modified residue" description="Phosphoserine" evidence="67 70">
    <location>
        <position position="744"/>
    </location>
</feature>
<feature type="modified residue" description="Phosphoserine" evidence="70">
    <location>
        <position position="748"/>
    </location>
</feature>
<feature type="modified residue" description="Phosphoserine" evidence="66 67 71">
    <location>
        <position position="780"/>
    </location>
</feature>
<feature type="modified residue" description="Phosphoserine" evidence="70">
    <location>
        <position position="908"/>
    </location>
</feature>
<feature type="modified residue" description="Phosphoserine" evidence="2">
    <location>
        <position position="987"/>
    </location>
</feature>
<feature type="modified residue" description="Phosphoserine" evidence="3">
    <location>
        <position position="1038"/>
    </location>
</feature>
<feature type="modified residue" description="Phosphoserine" evidence="66 70">
    <location>
        <position position="1042"/>
    </location>
</feature>
<feature type="modified residue" description="Phosphoserine" evidence="66">
    <location>
        <position position="1360"/>
    </location>
</feature>
<feature type="modified residue" description="Phosphoserine" evidence="70">
    <location>
        <position position="1371"/>
    </location>
</feature>
<feature type="modified residue" description="Phosphoserine" evidence="70">
    <location>
        <position position="1385"/>
    </location>
</feature>
<feature type="modified residue" description="Phosphoserine" evidence="3">
    <location>
        <position position="1392"/>
    </location>
</feature>
<feature type="modified residue" description="Phosphoserine" evidence="3">
    <location>
        <position position="1395"/>
    </location>
</feature>
<feature type="modified residue" description="Phosphothreonine" evidence="70">
    <location>
        <position position="1438"/>
    </location>
</feature>
<feature type="modified residue" description="Phosphoserine" evidence="2">
    <location>
        <position position="1567"/>
    </location>
</feature>
<feature type="modified residue" description="Phosphoserine" evidence="70">
    <location>
        <position position="1774"/>
    </location>
</feature>
<feature type="modified residue" description="Phosphoserine" evidence="66 68 70">
    <location>
        <position position="1861"/>
    </location>
</feature>
<feature type="modified residue" description="Phosphoserine" evidence="66 68">
    <location>
        <position position="1863"/>
    </location>
</feature>
<feature type="modified residue" description="Phosphoserine" evidence="66 68">
    <location>
        <position position="1864"/>
    </location>
</feature>
<feature type="modified residue" description="Phosphoserine" evidence="3">
    <location>
        <position position="1971"/>
    </location>
</feature>
<feature type="modified residue" description="Phosphoserine" evidence="3">
    <location>
        <position position="1973"/>
    </location>
</feature>
<feature type="modified residue" description="Phosphoserine" evidence="2">
    <location>
        <position position="2088"/>
    </location>
</feature>
<feature type="modified residue" description="Phosphoserine" evidence="2">
    <location>
        <position position="2093"/>
    </location>
</feature>
<feature type="modified residue" description="Phosphoserine" evidence="3">
    <location>
        <position position="2125"/>
    </location>
</feature>
<feature type="modified residue" description="Phosphoserine" evidence="2">
    <location>
        <position position="2129"/>
    </location>
</feature>
<feature type="modified residue" description="Phosphoserine" evidence="2">
    <location>
        <position position="2130"/>
    </location>
</feature>
<feature type="modified residue" description="Phosphoserine" evidence="2">
    <location>
        <position position="2132"/>
    </location>
</feature>
<feature type="modified residue" description="Phosphothreonine" evidence="66">
    <location>
        <position position="2151"/>
    </location>
</feature>
<feature type="modified residue" description="Phosphoserine" evidence="66 70">
    <location>
        <position position="2260"/>
    </location>
</feature>
<feature type="modified residue" description="Phosphoserine" evidence="66">
    <location>
        <position position="2270"/>
    </location>
</feature>
<feature type="modified residue" description="Phosphoserine" evidence="66 70">
    <location>
        <position position="2283"/>
    </location>
</feature>
<feature type="modified residue" description="Phosphoserine" evidence="66">
    <location>
        <position position="2473"/>
    </location>
</feature>
<feature type="modified residue" description="Phosphoserine" evidence="66">
    <location>
        <position position="2535"/>
    </location>
</feature>
<feature type="modified residue" description="Phosphoserine" evidence="70">
    <location>
        <position position="2569"/>
    </location>
</feature>
<feature type="modified residue" description="Phosphoserine" evidence="65 66">
    <location>
        <position position="2671"/>
    </location>
</feature>
<feature type="modified residue" description="Phosphoserine" evidence="66 70">
    <location>
        <position position="2674"/>
    </location>
</feature>
<feature type="modified residue" description="Phosphothreonine" evidence="66">
    <location>
        <position position="2679"/>
    </location>
</feature>
<feature type="modified residue" description="Phosphoserine" evidence="2">
    <location>
        <position position="2710"/>
    </location>
</feature>
<feature type="modified residue" description="Phosphoserine" evidence="70">
    <location>
        <position position="2724"/>
    </location>
</feature>
<feature type="modified residue" description="Phosphoserine" evidence="66 70">
    <location>
        <position position="2789"/>
    </location>
</feature>
<feature type="splice variant" id="VSP_059027" description="In isoform 1B.">
    <original>MAAASYDQLLKQVEALKMENSNLRQELEDNSNHLTKLETEASNMK</original>
    <variation>MYASLGSGPVAPLPASVPPSVLGSWSTGGSRSCVRQETKSPGGARTSGHWASVWQ</variation>
    <location>
        <begin position="1"/>
        <end position="45"/>
    </location>
</feature>
<feature type="splice variant" id="VSP_059028" description="In isoform 1B.">
    <location>
        <begin position="217"/>
        <end position="244"/>
    </location>
</feature>
<feature type="splice variant" id="VSP_004115" description="In isoform 2." evidence="60">
    <location>
        <begin position="312"/>
        <end position="412"/>
    </location>
</feature>
<feature type="sequence variant" id="VAR_009613" description="In FAP1; benign; dbSNP:rs139196838." evidence="44">
    <original>R</original>
    <variation>W</variation>
    <location>
        <position position="99"/>
    </location>
</feature>
<feature type="sequence variant" id="VAR_005032" description="In FAP1." evidence="51">
    <original>S</original>
    <variation>I</variation>
    <location>
        <position position="171"/>
    </location>
</feature>
<feature type="sequence variant" id="VAR_005033" description="In FAP1; benign; dbSNP:rs137854567." evidence="46">
    <original>R</original>
    <variation>C</variation>
    <location>
        <position position="414"/>
    </location>
</feature>
<feature type="sequence variant" id="VAR_009614" description="In FAP1." evidence="45">
    <original>S</original>
    <variation>G</variation>
    <location>
        <position position="722"/>
    </location>
</feature>
<feature type="sequence variant" id="VAR_005034" description="In FAP1." evidence="46">
    <original>S</original>
    <variation>T</variation>
    <location>
        <position position="784"/>
    </location>
</feature>
<feature type="sequence variant" id="VAR_005035" description="In gastric cancer.">
    <original>G</original>
    <variation>C</variation>
    <location>
        <position position="817"/>
    </location>
</feature>
<feature type="sequence variant" id="VAR_053976" description="In dbSNP:rs33974176.">
    <original>P</original>
    <variation>S</variation>
    <location>
        <position position="870"/>
    </location>
</feature>
<feature type="sequence variant" id="VAR_005036" description="In colorectal carcinoma and gastric cancer; from a patient with MMRCS; dbSNP:rs1400295986." evidence="53">
    <original>I</original>
    <variation>T</variation>
    <location>
        <position position="880"/>
    </location>
</feature>
<feature type="sequence variant" id="VAR_012975" description="In colorectal carcinoma; from a patient with MMRCS; dbSNP:rs779998847." evidence="53">
    <original>V</original>
    <variation>I</variation>
    <location>
        <position position="890"/>
    </location>
</feature>
<feature type="sequence variant" id="VAR_005037" description="In colorectal tumor.">
    <original>S</original>
    <variation>Y</variation>
    <location>
        <position position="906"/>
    </location>
</feature>
<feature type="sequence variant" id="VAR_005038" description="In FAP1 and colorectal tumor." evidence="16">
    <original>E</original>
    <variation>G</variation>
    <location>
        <position position="911"/>
    </location>
</feature>
<feature type="sequence variant" id="VAR_005039" description="In gastric cancer.">
    <original>N</original>
    <variation>D</variation>
    <location>
        <position position="942"/>
    </location>
</feature>
<feature type="sequence variant" id="VAR_005040" description="In colorectal tumor; dbSNP:rs869312784.">
    <original>Y</original>
    <variation>C</variation>
    <location>
        <position position="1027"/>
    </location>
</feature>
<feature type="sequence variant" id="VAR_009615" description="Found in a family whose members exhibit gastrointestinal cancers and multiple pigmented cutaneous lesions; uncertain significance." evidence="57">
    <original>E</original>
    <variation>G</variation>
    <location>
        <position position="1057"/>
    </location>
</feature>
<feature type="sequence variant" id="VAR_005041" description="In dbSNP:rs140493115." evidence="15">
    <original>N</original>
    <variation>D</variation>
    <location>
        <position position="1118"/>
    </location>
</feature>
<feature type="sequence variant" id="VAR_005042" description="In gastric cancer; dbSNP:rs28933379.">
    <original>G</original>
    <variation>E</variation>
    <location>
        <position position="1120"/>
    </location>
</feature>
<feature type="sequence variant" id="VAR_008992" description="In dbSNP:rs201830995." evidence="57">
    <original>R</original>
    <variation>C</variation>
    <location>
        <position position="1171"/>
    </location>
</feature>
<feature type="sequence variant" id="VAR_005043" description="In gastric cancer; dbSNP:rs372481703.">
    <original>R</original>
    <variation>H</variation>
    <location>
        <position position="1171"/>
    </location>
</feature>
<feature type="sequence variant" id="VAR_005044" description="In FAP1." evidence="46">
    <original>P</original>
    <variation>L</variation>
    <location>
        <position position="1176"/>
    </location>
</feature>
<feature type="sequence variant" id="VAR_009616" description="In FAP1." evidence="6">
    <original>A</original>
    <variation>P</variation>
    <location>
        <position position="1184"/>
    </location>
</feature>
<feature type="sequence variant" id="VAR_005045" description="In gastric cancer.">
    <original>F</original>
    <variation>S</variation>
    <location>
        <position position="1197"/>
    </location>
</feature>
<feature type="sequence variant" id="VAR_035794" description="In a colorectal cancer sample; somatic mutation." evidence="23">
    <original>I</original>
    <variation>F</variation>
    <location>
        <position position="1254"/>
    </location>
</feature>
<feature type="sequence variant" id="VAR_005046" description="In gastric cancer.">
    <original>I</original>
    <variation>T</variation>
    <location>
        <position position="1259"/>
    </location>
</feature>
<feature type="sequence variant" id="VAR_005047" description="In FAP1; uncertain significance; dbSNP:rs371113837." evidence="15">
    <original>T</original>
    <variation>M</variation>
    <location>
        <position position="1292"/>
    </location>
</feature>
<feature type="sequence variant" id="VAR_017653" description="In MDB; sporadic; dbSNP:rs1291513037." evidence="7">
    <original>A</original>
    <variation>V</variation>
    <location>
        <position position="1296"/>
    </location>
</feature>
<feature type="sequence variant" id="VAR_005048" description="In dbSNP:rs770157475." evidence="15">
    <original>I</original>
    <variation>V</variation>
    <location>
        <position position="1304"/>
    </location>
</feature>
<feature type="sequence variant" id="VAR_005049" description="Probable risk factor for colon and breast cancer; dbSNP:rs1801155." evidence="54 55 56 58">
    <original>I</original>
    <variation>K</variation>
    <location>
        <position position="1307"/>
    </location>
</feature>
<feature type="sequence variant" id="VAR_005050" description="In gastric cancer.">
    <original>G</original>
    <variation>E</variation>
    <location>
        <position position="1312"/>
    </location>
</feature>
<feature type="sequence variant" id="VAR_005051" description="In FAP1 and colorectal tumor; dbSNP:rs863225349.">
    <original>T</original>
    <variation>A</variation>
    <location>
        <position position="1313"/>
    </location>
</feature>
<feature type="sequence variant" id="VAR_009617" description="May contribute to colorectal tumor development; dbSNP:rs1801166." evidence="54">
    <original>E</original>
    <variation>Q</variation>
    <location>
        <position position="1317"/>
    </location>
</feature>
<feature type="sequence variant" id="VAR_005052" description="In gastric cancer.">
    <original>V</original>
    <variation>A</variation>
    <location>
        <position position="1326"/>
    </location>
</feature>
<feature type="sequence variant" id="VAR_005053" description="In FAP1." evidence="15">
    <original>R</original>
    <variation>W</variation>
    <location>
        <position position="1348"/>
    </location>
</feature>
<feature type="sequence variant" id="VAR_065133" description="In hepatoblastoma; dbSNP:rs137854578." evidence="49">
    <original>S</original>
    <variation>C</variation>
    <location>
        <position position="1395"/>
    </location>
</feature>
<feature type="sequence variant" id="VAR_005054" description="In colorectal tumor.">
    <original>D</original>
    <variation>H</variation>
    <location>
        <position position="1422"/>
    </location>
</feature>
<feature type="sequence variant" id="VAR_017654" description="In MDB; sporadic; dbSNP:rs878853445." evidence="7">
    <original>V</original>
    <variation>I</variation>
    <location>
        <position position="1472"/>
    </location>
</feature>
<feature type="sequence variant" id="VAR_017655" description="In MDB; sporadic." evidence="7">
    <original>S</original>
    <variation>G</variation>
    <location>
        <position position="1495"/>
    </location>
</feature>
<feature type="sequence variant" id="VAR_020141" description="In dbSNP:rs2229996.">
    <original>T</original>
    <variation>S</variation>
    <location>
        <position position="1496"/>
    </location>
</feature>
<feature type="sequence variant" id="VAR_012976" description="In colorectal carcinoma from a patient with MMRCS." evidence="53">
    <original>A</original>
    <variation>V</variation>
    <location>
        <position position="1508"/>
    </location>
</feature>
<feature type="sequence variant" id="VAR_008993" description="In dbSNP:rs459552." evidence="19 22 57 59">
    <original>V</original>
    <variation>D</variation>
    <location>
        <position position="1822"/>
    </location>
</feature>
<feature type="sequence variant" id="VAR_053977" description="In dbSNP:rs34157245.">
    <original>R</original>
    <variation>T</variation>
    <location>
        <position position="1882"/>
    </location>
</feature>
<feature type="sequence variant" id="VAR_020142" description="In dbSNP:rs4987109.">
    <original>S</original>
    <variation>T</variation>
    <location>
        <position position="1973"/>
    </location>
</feature>
<feature type="sequence variant" id="VAR_053978" description="In dbSNP:rs33941929.">
    <original>V</original>
    <variation>L</variation>
    <location>
        <position position="2499"/>
    </location>
</feature>
<feature type="sequence variant" id="VAR_005055" description="In dbSNP:rs2229995." evidence="15">
    <original>G</original>
    <variation>S</variation>
    <location>
        <position position="2502"/>
    </location>
</feature>
<feature type="sequence variant" id="VAR_005056" description="In FAP1; benign; dbSNP:rs72541816." evidence="13">
    <original>S</original>
    <variation>C</variation>
    <location>
        <position position="2621"/>
    </location>
</feature>
<feature type="sequence variant" id="VAR_008994" description="In dbSNP:rs863224552." evidence="57">
    <original>I</original>
    <variation>T</variation>
    <location>
        <position position="2738"/>
    </location>
</feature>
<feature type="sequence variant" id="VAR_005057" description="In FAP1; dbSNP:rs876658156." evidence="13">
    <original>L</original>
    <variation>F</variation>
    <location>
        <position position="2839"/>
    </location>
</feature>
<feature type="mutagenesis site" description="Impairs interaction with KHDRBS1." evidence="35">
    <original>K</original>
    <variation>E</variation>
    <location>
        <position position="516"/>
    </location>
</feature>
<feature type="mutagenesis site" description="Impairs interaction with KHDRBS1." evidence="35">
    <original>R</original>
    <variation>E</variation>
    <location>
        <position position="549"/>
    </location>
</feature>
<feature type="mutagenesis site" description="Loss of interaction with SCRIB." evidence="21">
    <original>T</original>
    <variation>L</variation>
    <location>
        <position position="2841"/>
    </location>
</feature>
<feature type="mutagenesis site" description="Loss of interaction with SCRIB." evidence="21">
    <original>V</original>
    <variation>Q</variation>
    <location>
        <position position="2843"/>
    </location>
</feature>
<feature type="sequence conflict" description="In Ref. 1; AAA60353/AAA60354." evidence="62" ref="1">
    <original>M</original>
    <variation>L</variation>
    <location>
        <position position="184"/>
    </location>
</feature>
<feature type="sequence conflict" description="In Ref. 1; AAA60353/AAA60354." evidence="62" ref="1">
    <original>S</original>
    <variation>N</variation>
    <location>
        <position position="970"/>
    </location>
</feature>
<feature type="sequence conflict" description="In Ref. 1; AAA60353/AAA60354." evidence="62" ref="1">
    <original>E</original>
    <variation>G</variation>
    <location>
        <position position="1309"/>
    </location>
</feature>
<feature type="sequence conflict" description="In Ref. 1; AAA60353/AAA60354." evidence="62" ref="1">
    <original>AVSQHPR</original>
    <variation>SSVHSTLE</variation>
    <location>
        <begin position="1325"/>
        <end position="1331"/>
    </location>
</feature>
<feature type="sequence conflict" description="In Ref. 1; AAA60353/AAA60354." evidence="62" ref="1">
    <original>S</original>
    <variation>P</variation>
    <location>
        <position position="1355"/>
    </location>
</feature>
<feature type="sequence conflict" description="In Ref. 1; AAA60353/AAA60354." evidence="62" ref="1">
    <original>A</original>
    <variation>G</variation>
    <location>
        <position position="1591"/>
    </location>
</feature>
<feature type="sequence conflict" description="In Ref. 1; AAA60353/AAA60354." evidence="62" ref="1">
    <original>N</original>
    <variation>T</variation>
    <location>
        <position position="2723"/>
    </location>
</feature>
<feature type="sequence conflict" description="In Ref. 1; AAA60353/AAA60354." evidence="62" ref="1">
    <original>S</original>
    <variation>P</variation>
    <location>
        <position position="2755"/>
    </location>
</feature>
<feature type="helix" evidence="72">
    <location>
        <begin position="6"/>
        <end position="53"/>
    </location>
</feature>
<feature type="helix" evidence="75">
    <location>
        <begin position="132"/>
        <end position="169"/>
    </location>
</feature>
<feature type="helix" evidence="84">
    <location>
        <begin position="176"/>
        <end position="178"/>
    </location>
</feature>
<feature type="helix" evidence="75">
    <location>
        <begin position="180"/>
        <end position="204"/>
    </location>
</feature>
<feature type="helix" evidence="75">
    <location>
        <begin position="208"/>
        <end position="238"/>
    </location>
</feature>
<feature type="helix" evidence="80">
    <location>
        <begin position="328"/>
        <end position="338"/>
    </location>
</feature>
<feature type="helix" evidence="80">
    <location>
        <begin position="343"/>
        <end position="350"/>
    </location>
</feature>
<feature type="helix" evidence="80">
    <location>
        <begin position="353"/>
        <end position="360"/>
    </location>
</feature>
<feature type="helix" evidence="80">
    <location>
        <begin position="377"/>
        <end position="393"/>
    </location>
</feature>
<feature type="helix" evidence="82">
    <location>
        <begin position="407"/>
        <end position="426"/>
    </location>
</feature>
<feature type="strand" evidence="78">
    <location>
        <begin position="429"/>
        <end position="431"/>
    </location>
</feature>
<feature type="turn" evidence="82">
    <location>
        <begin position="433"/>
        <end position="435"/>
    </location>
</feature>
<feature type="helix" evidence="82">
    <location>
        <begin position="441"/>
        <end position="444"/>
    </location>
</feature>
<feature type="helix" evidence="82">
    <location>
        <begin position="446"/>
        <end position="456"/>
    </location>
</feature>
<feature type="helix" evidence="82">
    <location>
        <begin position="460"/>
        <end position="468"/>
    </location>
</feature>
<feature type="helix" evidence="82">
    <location>
        <begin position="471"/>
        <end position="486"/>
    </location>
</feature>
<feature type="helix" evidence="82">
    <location>
        <begin position="492"/>
        <end position="509"/>
    </location>
</feature>
<feature type="helix" evidence="82">
    <location>
        <begin position="513"/>
        <end position="521"/>
    </location>
</feature>
<feature type="helix" evidence="82">
    <location>
        <begin position="523"/>
        <end position="531"/>
    </location>
</feature>
<feature type="helix" evidence="82">
    <location>
        <begin position="532"/>
        <end position="534"/>
    </location>
</feature>
<feature type="helix" evidence="82">
    <location>
        <begin position="538"/>
        <end position="552"/>
    </location>
</feature>
<feature type="helix" evidence="82">
    <location>
        <begin position="557"/>
        <end position="565"/>
    </location>
</feature>
<feature type="helix" evidence="82">
    <location>
        <begin position="568"/>
        <end position="578"/>
    </location>
</feature>
<feature type="helix" evidence="82">
    <location>
        <begin position="582"/>
        <end position="596"/>
    </location>
</feature>
<feature type="helix" evidence="82">
    <location>
        <begin position="600"/>
        <end position="607"/>
    </location>
</feature>
<feature type="helix" evidence="82">
    <location>
        <begin position="612"/>
        <end position="619"/>
    </location>
</feature>
<feature type="strand" evidence="79">
    <location>
        <begin position="625"/>
        <end position="627"/>
    </location>
</feature>
<feature type="helix" evidence="82">
    <location>
        <begin position="629"/>
        <end position="646"/>
    </location>
</feature>
<feature type="helix" evidence="82">
    <location>
        <begin position="650"/>
        <end position="658"/>
    </location>
</feature>
<feature type="helix" evidence="82">
    <location>
        <begin position="661"/>
        <end position="668"/>
    </location>
</feature>
<feature type="helix" evidence="82">
    <location>
        <begin position="674"/>
        <end position="687"/>
    </location>
</feature>
<feature type="strand" evidence="81">
    <location>
        <begin position="688"/>
        <end position="690"/>
    </location>
</feature>
<feature type="helix" evidence="82">
    <location>
        <begin position="692"/>
        <end position="700"/>
    </location>
</feature>
<feature type="helix" evidence="82">
    <location>
        <begin position="703"/>
        <end position="708"/>
    </location>
</feature>
<feature type="turn" evidence="82">
    <location>
        <begin position="709"/>
        <end position="712"/>
    </location>
</feature>
<feature type="helix" evidence="82">
    <location>
        <begin position="716"/>
        <end position="731"/>
    </location>
</feature>
<feature type="helix" evidence="82">
    <location>
        <begin position="735"/>
        <end position="737"/>
    </location>
</feature>
<feature type="helix" evidence="82">
    <location>
        <begin position="739"/>
        <end position="742"/>
    </location>
</feature>
<feature type="turn" evidence="74">
    <location>
        <begin position="1027"/>
        <end position="1030"/>
    </location>
</feature>
<feature type="helix" evidence="76">
    <location>
        <begin position="1470"/>
        <end position="1479"/>
    </location>
</feature>
<feature type="helix" evidence="77">
    <location>
        <begin position="1520"/>
        <end position="1524"/>
    </location>
</feature>
<feature type="helix" evidence="73">
    <location>
        <begin position="2036"/>
        <end position="2045"/>
    </location>
</feature>
<feature type="strand" evidence="83">
    <location>
        <begin position="2841"/>
        <end position="2843"/>
    </location>
</feature>
<evidence type="ECO:0000250" key="1"/>
<evidence type="ECO:0000250" key="2">
    <source>
        <dbReference type="UniProtKB" id="P70478"/>
    </source>
</evidence>
<evidence type="ECO:0000250" key="3">
    <source>
        <dbReference type="UniProtKB" id="Q61315"/>
    </source>
</evidence>
<evidence type="ECO:0000255" key="4"/>
<evidence type="ECO:0000256" key="5">
    <source>
        <dbReference type="SAM" id="MobiDB-lite"/>
    </source>
</evidence>
<evidence type="ECO:0000269" key="6">
    <source>
    </source>
</evidence>
<evidence type="ECO:0000269" key="7">
    <source>
    </source>
</evidence>
<evidence type="ECO:0000269" key="8">
    <source>
    </source>
</evidence>
<evidence type="ECO:0000269" key="9">
    <source>
    </source>
</evidence>
<evidence type="ECO:0000269" key="10">
    <source>
    </source>
</evidence>
<evidence type="ECO:0000269" key="11">
    <source>
    </source>
</evidence>
<evidence type="ECO:0000269" key="12">
    <source>
    </source>
</evidence>
<evidence type="ECO:0000269" key="13">
    <source>
    </source>
</evidence>
<evidence type="ECO:0000269" key="14">
    <source>
    </source>
</evidence>
<evidence type="ECO:0000269" key="15">
    <source>
    </source>
</evidence>
<evidence type="ECO:0000269" key="16">
    <source>
    </source>
</evidence>
<evidence type="ECO:0000269" key="17">
    <source>
    </source>
</evidence>
<evidence type="ECO:0000269" key="18">
    <source>
    </source>
</evidence>
<evidence type="ECO:0000269" key="19">
    <source>
    </source>
</evidence>
<evidence type="ECO:0000269" key="20">
    <source>
    </source>
</evidence>
<evidence type="ECO:0000269" key="21">
    <source>
    </source>
</evidence>
<evidence type="ECO:0000269" key="22">
    <source>
    </source>
</evidence>
<evidence type="ECO:0000269" key="23">
    <source>
    </source>
</evidence>
<evidence type="ECO:0000269" key="24">
    <source>
    </source>
</evidence>
<evidence type="ECO:0000269" key="25">
    <source>
    </source>
</evidence>
<evidence type="ECO:0000269" key="26">
    <source>
    </source>
</evidence>
<evidence type="ECO:0000269" key="27">
    <source>
    </source>
</evidence>
<evidence type="ECO:0000269" key="28">
    <source>
    </source>
</evidence>
<evidence type="ECO:0000269" key="29">
    <source>
    </source>
</evidence>
<evidence type="ECO:0000269" key="30">
    <source>
    </source>
</evidence>
<evidence type="ECO:0000269" key="31">
    <source>
    </source>
</evidence>
<evidence type="ECO:0000269" key="32">
    <source>
    </source>
</evidence>
<evidence type="ECO:0000269" key="33">
    <source>
    </source>
</evidence>
<evidence type="ECO:0000269" key="34">
    <source>
    </source>
</evidence>
<evidence type="ECO:0000269" key="35">
    <source>
    </source>
</evidence>
<evidence type="ECO:0000269" key="36">
    <source>
    </source>
</evidence>
<evidence type="ECO:0000269" key="37">
    <source>
    </source>
</evidence>
<evidence type="ECO:0000269" key="38">
    <source>
    </source>
</evidence>
<evidence type="ECO:0000269" key="39">
    <source>
    </source>
</evidence>
<evidence type="ECO:0000269" key="40">
    <source>
    </source>
</evidence>
<evidence type="ECO:0000269" key="41">
    <source>
    </source>
</evidence>
<evidence type="ECO:0000269" key="42">
    <source>
    </source>
</evidence>
<evidence type="ECO:0000269" key="43">
    <source>
    </source>
</evidence>
<evidence type="ECO:0000269" key="44">
    <source>
    </source>
</evidence>
<evidence type="ECO:0000269" key="45">
    <source>
    </source>
</evidence>
<evidence type="ECO:0000269" key="46">
    <source>
    </source>
</evidence>
<evidence type="ECO:0000269" key="47">
    <source>
    </source>
</evidence>
<evidence type="ECO:0000269" key="48">
    <source>
    </source>
</evidence>
<evidence type="ECO:0000269" key="49">
    <source>
    </source>
</evidence>
<evidence type="ECO:0000269" key="50">
    <source>
    </source>
</evidence>
<evidence type="ECO:0000269" key="51">
    <source>
    </source>
</evidence>
<evidence type="ECO:0000269" key="52">
    <source>
    </source>
</evidence>
<evidence type="ECO:0000269" key="53">
    <source>
    </source>
</evidence>
<evidence type="ECO:0000269" key="54">
    <source>
    </source>
</evidence>
<evidence type="ECO:0000269" key="55">
    <source>
    </source>
</evidence>
<evidence type="ECO:0000269" key="56">
    <source>
    </source>
</evidence>
<evidence type="ECO:0000269" key="57">
    <source>
    </source>
</evidence>
<evidence type="ECO:0000269" key="58">
    <source>
    </source>
</evidence>
<evidence type="ECO:0000269" key="59">
    <source ref="5"/>
</evidence>
<evidence type="ECO:0000303" key="60">
    <source>
    </source>
</evidence>
<evidence type="ECO:0000303" key="61">
    <source>
    </source>
</evidence>
<evidence type="ECO:0000305" key="62"/>
<evidence type="ECO:0000312" key="63">
    <source>
        <dbReference type="EMBL" id="BAH11802.1"/>
    </source>
</evidence>
<evidence type="ECO:0000312" key="64">
    <source>
        <dbReference type="HGNC" id="HGNC:583"/>
    </source>
</evidence>
<evidence type="ECO:0007744" key="65">
    <source>
    </source>
</evidence>
<evidence type="ECO:0007744" key="66">
    <source>
    </source>
</evidence>
<evidence type="ECO:0007744" key="67">
    <source>
    </source>
</evidence>
<evidence type="ECO:0007744" key="68">
    <source>
    </source>
</evidence>
<evidence type="ECO:0007744" key="69">
    <source>
    </source>
</evidence>
<evidence type="ECO:0007744" key="70">
    <source>
    </source>
</evidence>
<evidence type="ECO:0007744" key="71">
    <source>
    </source>
</evidence>
<evidence type="ECO:0007829" key="72">
    <source>
        <dbReference type="PDB" id="1DEB"/>
    </source>
</evidence>
<evidence type="ECO:0007829" key="73">
    <source>
        <dbReference type="PDB" id="1EMU"/>
    </source>
</evidence>
<evidence type="ECO:0007829" key="74">
    <source>
        <dbReference type="PDB" id="1JPP"/>
    </source>
</evidence>
<evidence type="ECO:0007829" key="75">
    <source>
        <dbReference type="PDB" id="1M5I"/>
    </source>
</evidence>
<evidence type="ECO:0007829" key="76">
    <source>
        <dbReference type="PDB" id="1TH1"/>
    </source>
</evidence>
<evidence type="ECO:0007829" key="77">
    <source>
        <dbReference type="PDB" id="1V18"/>
    </source>
</evidence>
<evidence type="ECO:0007829" key="78">
    <source>
        <dbReference type="PDB" id="3AU3"/>
    </source>
</evidence>
<evidence type="ECO:0007829" key="79">
    <source>
        <dbReference type="PDB" id="3NMW"/>
    </source>
</evidence>
<evidence type="ECO:0007829" key="80">
    <source>
        <dbReference type="PDB" id="3NMZ"/>
    </source>
</evidence>
<evidence type="ECO:0007829" key="81">
    <source>
        <dbReference type="PDB" id="5IZ8"/>
    </source>
</evidence>
<evidence type="ECO:0007829" key="82">
    <source>
        <dbReference type="PDB" id="5IZA"/>
    </source>
</evidence>
<evidence type="ECO:0007829" key="83">
    <source>
        <dbReference type="PDB" id="7XTY"/>
    </source>
</evidence>
<evidence type="ECO:0007829" key="84">
    <source>
        <dbReference type="PDB" id="8X2Q"/>
    </source>
</evidence>
<accession>P25054</accession>
<accession>B7Z2B6</accession>
<accession>D3DT03</accession>
<accession>Q15162</accession>
<accession>Q15163</accession>
<accession>Q93042</accession>
<keyword id="KW-0002">3D-structure</keyword>
<keyword id="KW-0007">Acetylation</keyword>
<keyword id="KW-0877">Alternative promoter usage</keyword>
<keyword id="KW-0025">Alternative splicing</keyword>
<keyword id="KW-0965">Cell junction</keyword>
<keyword id="KW-1003">Cell membrane</keyword>
<keyword id="KW-0966">Cell projection</keyword>
<keyword id="KW-0175">Coiled coil</keyword>
<keyword id="KW-0963">Cytoplasm</keyword>
<keyword id="KW-0206">Cytoskeleton</keyword>
<keyword id="KW-0225">Disease variant</keyword>
<keyword id="KW-0472">Membrane</keyword>
<keyword id="KW-0493">Microtubule</keyword>
<keyword id="KW-0597">Phosphoprotein</keyword>
<keyword id="KW-1267">Proteomics identification</keyword>
<keyword id="KW-1185">Reference proteome</keyword>
<keyword id="KW-0677">Repeat</keyword>
<keyword id="KW-0043">Tumor suppressor</keyword>
<keyword id="KW-0832">Ubl conjugation</keyword>
<keyword id="KW-0879">Wnt signaling pathway</keyword>
<name>APC_HUMAN</name>
<comment type="function">
    <text evidence="3 10 24 25 27 30 32">Tumor suppressor. Promotes rapid degradation of CTNNB1 and participates in Wnt signaling as a negative regulator. APC activity is correlated with its phosphorylation state. Activates the GEF activity of SPATA13 and ARHGEF4. Plays a role in hepatocyte growth factor (HGF)-induced cell migration. Required for MMP9 up-regulation via the JNK signaling pathway in colorectal tumor cells. Associates with both microtubules and actin filaments, components of the cytoskeleton (PubMed:17293347). Plays a role in mediating the organization of F-actin into ordered bundles (PubMed:17293347). Functions downstream of Rho GTPases and DIAPH1 to selectively stabilize microtubules (By similarity). Acts as a mediator of ERBB2-dependent stabilization of microtubules at the cell cortex. It is required for the localization of MACF1 to the cell membrane and this localization of MACF1 is critical for its function in microtubule stabilization.</text>
</comment>
<comment type="subunit">
    <text evidence="2 3 9 10 11 12 17 21 24 25 29 31 33 35 36 37 47 48 52 62">Forms homooligomers (Probable). Found in a complex consisting of ARHGEF4, APC and CTNNB1 (PubMed:10947987). Found in a complex composed of MACF1, APC, AXIN1, CTNNB1 and GSK3B (By similarity). The complex composed, at least, of APC, CTNNB1 and GSK3B interacts with JPT1; the interaction requires the inactive form of GSK3B (phosphorylated at 'Ser-9') (PubMed:25169422). Interacts with APC2 (PubMed:11691822). Interacts with DLG1 (via PDZ domains) and DLG3 (via PDZ domains) (PubMed:8638125, PubMed:9188857). Interacts with alpha- and beta-catenins (PubMed:8259519). Interacts with AXIN1 (via RGS domain) (PubMed:10811618). Interacts with ARHGEF4 (via N-terminus) (PubMed:10947987). Interacts (via C-terminal residues 2674-2843) with MAPRE1 (via C-terminal residues 206-211); the interaction inhibits association with and bundling of F-actin (PubMed:14514668, PubMed:17293347, PubMed:19632184). Interacts with MAPRE2 and MAPRE3 (via C-terminus) (PubMed:14514668). Interacts with DIAPH1; DIAPH1 acts as a scaffold protein for MAPRE1 and APC to stabilize microtubules and promote cell migration (By similarity). Interacts with DIAPH2 (By similarity). Interacts with SCRIB; may mediate APC targeting to adherens junctions of epithelial cells (PubMed:16611247). Interacts with SPATA13 (via N-terminus and SH3 domain) (PubMed:17599059). Interacts with ASAP1 (via SH3 domain) (PubMed:20509626). Interacts (at the cell membrane) with AMER1 and AMER2 (via ARM repeats) (PubMed:21498506, PubMed:22128170). Interacts with KHDRBS1 (PubMed:22000517). Interacts with actin; binds both to F-actin and actin filament bundles (PubMed:17293347).</text>
</comment>
<comment type="interaction">
    <interactant intactId="EBI-727707">
        <id>P25054</id>
    </interactant>
    <interactant intactId="EBI-6169747">
        <id>Q5JTC6</id>
        <label>AMER1</label>
    </interactant>
    <organismsDiffer>false</organismsDiffer>
    <experiments>4</experiments>
</comment>
<comment type="interaction">
    <interactant intactId="EBI-727707">
        <id>P25054</id>
    </interactant>
    <interactant intactId="EBI-8869590">
        <id>Q8N944</id>
        <label>AMER3</label>
    </interactant>
    <organismsDiffer>false</organismsDiffer>
    <experiments>8</experiments>
</comment>
<comment type="interaction">
    <interactant intactId="EBI-727707">
        <id>P25054</id>
    </interactant>
    <interactant intactId="EBI-13639160">
        <id>Q9NR80-3</id>
        <label>ARHGEF4</label>
    </interactant>
    <organismsDiffer>false</organismsDiffer>
    <experiments>5</experiments>
</comment>
<comment type="interaction">
    <interactant intactId="EBI-727707">
        <id>P25054</id>
    </interactant>
    <interactant intactId="EBI-710484">
        <id>O15169</id>
        <label>AXIN1</label>
    </interactant>
    <organismsDiffer>false</organismsDiffer>
    <experiments>17</experiments>
</comment>
<comment type="interaction">
    <interactant intactId="EBI-727707">
        <id>P25054</id>
    </interactant>
    <interactant intactId="EBI-1215506">
        <id>O14936</id>
        <label>CASK</label>
    </interactant>
    <organismsDiffer>false</organismsDiffer>
    <experiments>2</experiments>
</comment>
<comment type="interaction">
    <interactant intactId="EBI-727707">
        <id>P25054</id>
    </interactant>
    <interactant intactId="EBI-81752">
        <id>P60953</id>
        <label>CDC42</label>
    </interactant>
    <organismsDiffer>false</organismsDiffer>
    <experiments>9</experiments>
</comment>
<comment type="interaction">
    <interactant intactId="EBI-727707">
        <id>P25054</id>
    </interactant>
    <interactant intactId="EBI-749343">
        <id>P49674</id>
        <label>CSNK1E</label>
    </interactant>
    <organismsDiffer>false</organismsDiffer>
    <experiments>8</experiments>
</comment>
<comment type="interaction">
    <interactant intactId="EBI-727707">
        <id>P25054</id>
    </interactant>
    <interactant intactId="EBI-701918">
        <id>P35221</id>
        <label>CTNNA1</label>
    </interactant>
    <organismsDiffer>false</organismsDiffer>
    <experiments>3</experiments>
</comment>
<comment type="interaction">
    <interactant intactId="EBI-727707">
        <id>P25054</id>
    </interactant>
    <interactant intactId="EBI-491549">
        <id>P35222</id>
        <label>CTNNB1</label>
    </interactant>
    <organismsDiffer>false</organismsDiffer>
    <experiments>22</experiments>
</comment>
<comment type="interaction">
    <interactant intactId="EBI-727707">
        <id>P25054</id>
    </interactant>
    <interactant intactId="EBI-357481">
        <id>Q12959</id>
        <label>DLG1</label>
    </interactant>
    <organismsDiffer>false</organismsDiffer>
    <experiments>2</experiments>
</comment>
<comment type="interaction">
    <interactant intactId="EBI-727707">
        <id>P25054</id>
    </interactant>
    <interactant intactId="EBI-723489">
        <id>O14640</id>
        <label>DVL1</label>
    </interactant>
    <organismsDiffer>false</organismsDiffer>
    <experiments>6</experiments>
</comment>
<comment type="interaction">
    <interactant intactId="EBI-727707">
        <id>P25054</id>
    </interactant>
    <interactant intactId="EBI-7848109">
        <id>P54792</id>
        <label>DVL1P1</label>
    </interactant>
    <organismsDiffer>false</organismsDiffer>
    <experiments>2</experiments>
</comment>
<comment type="interaction">
    <interactant intactId="EBI-727707">
        <id>P25054</id>
    </interactant>
    <interactant intactId="EBI-740850">
        <id>O14641</id>
        <label>DVL2</label>
    </interactant>
    <organismsDiffer>false</organismsDiffer>
    <experiments>2</experiments>
</comment>
<comment type="interaction">
    <interactant intactId="EBI-727707">
        <id>P25054</id>
    </interactant>
    <interactant intactId="EBI-702484">
        <id>P14923</id>
        <label>JUP</label>
    </interactant>
    <organismsDiffer>false</organismsDiffer>
    <experiments>3</experiments>
</comment>
<comment type="interaction">
    <interactant intactId="EBI-727707">
        <id>P25054</id>
    </interactant>
    <interactant intactId="EBI-1364">
        <id>Q07666</id>
        <label>KHDRBS1</label>
    </interactant>
    <organismsDiffer>false</organismsDiffer>
    <experiments>4</experiments>
</comment>
<comment type="interaction">
    <interactant intactId="EBI-727707">
        <id>P25054</id>
    </interactant>
    <interactant intactId="EBI-2681187">
        <id>Q14114</id>
        <label>LRP8</label>
    </interactant>
    <organismsDiffer>false</organismsDiffer>
    <experiments>2</experiments>
</comment>
<comment type="interaction">
    <interactant intactId="EBI-727707">
        <id>P25054</id>
    </interactant>
    <interactant intactId="EBI-1004115">
        <id>Q15691</id>
        <label>MAPRE1</label>
    </interactant>
    <organismsDiffer>false</organismsDiffer>
    <experiments>6</experiments>
</comment>
<comment type="interaction">
    <interactant intactId="EBI-727707">
        <id>P25054</id>
    </interactant>
    <interactant intactId="EBI-357345">
        <id>Q14160</id>
        <label>SCRIB</label>
    </interactant>
    <organismsDiffer>false</organismsDiffer>
    <experiments>5</experiments>
</comment>
<comment type="interaction">
    <interactant intactId="EBI-727707">
        <id>P25054</id>
    </interactant>
    <interactant intactId="EBI-13618641">
        <id>Q96N96</id>
        <label>SPATA13</label>
    </interactant>
    <organismsDiffer>false</organismsDiffer>
    <experiments>5</experiments>
</comment>
<comment type="interaction">
    <interactant intactId="EBI-727707">
        <id>P25054</id>
    </interactant>
    <interactant intactId="EBI-13638906">
        <id>Q96N96-1</id>
        <label>SPATA13</label>
    </interactant>
    <organismsDiffer>false</organismsDiffer>
    <experiments>5</experiments>
</comment>
<comment type="interaction">
    <interactant intactId="EBI-727707">
        <id>P25054</id>
    </interactant>
    <interactant intactId="EBI-13639118">
        <id>Q96N96-2</id>
        <label>SPATA13</label>
    </interactant>
    <organismsDiffer>false</organismsDiffer>
    <experiments>2</experiments>
</comment>
<comment type="interaction">
    <interactant intactId="EBI-727707">
        <id>P25054</id>
    </interactant>
    <interactant intactId="EBI-347088">
        <id>P63104</id>
        <label>YWHAZ</label>
    </interactant>
    <organismsDiffer>false</organismsDiffer>
    <experiments>2</experiments>
</comment>
<comment type="interaction">
    <interactant intactId="EBI-727707">
        <id>P25054</id>
    </interactant>
    <interactant intactId="EBI-397872">
        <id>Q02248</id>
        <label>Ctnnb1</label>
    </interactant>
    <organismsDiffer>true</organismsDiffer>
    <experiments>8</experiments>
</comment>
<comment type="subcellular location">
    <subcellularLocation>
        <location evidence="21">Cell junction</location>
        <location evidence="21">Adherens junction</location>
    </subcellularLocation>
    <subcellularLocation>
        <location evidence="29 32">Cytoplasm</location>
        <location evidence="29 32">Cytoskeleton</location>
    </subcellularLocation>
    <subcellularLocation>
        <location evidence="27">Cell projection</location>
        <location evidence="27">Lamellipodium</location>
    </subcellularLocation>
    <subcellularLocation>
        <location evidence="27">Cell projection</location>
        <location evidence="27">Ruffle membrane</location>
    </subcellularLocation>
    <subcellularLocation>
        <location evidence="10">Cytoplasm</location>
    </subcellularLocation>
    <subcellularLocation>
        <location evidence="10 21 32">Cell membrane</location>
    </subcellularLocation>
    <text evidence="27 29 32">Associated with the microtubule network at the growing distal tip of microtubules (PubMed:19632184). MAPRE1 may be required for targeting to the growing microtubule plus ends (PubMed:19632184). Accumulates in the lamellipodium and ruffle membrane in response to hepatocyte growth factor (HGF) treatment (PubMed:19151759). The MEMO1-RHOA-DIAPH1 signaling pathway controls localization of the phosphorylated form to the cell membrane (PubMed:20937854).</text>
</comment>
<comment type="alternative products">
    <event type="alternative promoter"/>
    <event type="alternative splicing"/>
    <isoform>
        <id>P25054-1</id>
        <name evidence="61">1A</name>
        <name evidence="60">Long</name>
        <sequence type="displayed"/>
    </isoform>
    <isoform>
        <id>P25054-2</id>
        <name>2</name>
        <name evidence="60">Short</name>
        <sequence type="described" ref="VSP_004115"/>
    </isoform>
    <isoform>
        <id>P25054-3</id>
        <name evidence="61">1B</name>
        <sequence type="described" ref="VSP_059027 VSP_059028"/>
    </isoform>
</comment>
<comment type="tissue specificity">
    <text evidence="28 34 39">Expressed in a variety of tissues: brain, small intestine, colon, thymus, skeletal muscle, heart, prostate, lung, spleen, ovary, testis kidney, placenta, blood and liver (PubMed:21643010, PubMed:27217144). Isoform 1A: Very strongly expressed in brain but has relatively low expression levels in other tissues (PubMed:19527921, PubMed:21643010, PubMed:27217144). Isoform 1B: Predominant form in all tissues except for brain, including gastric mucosa and blood (PubMed:19527921, PubMed:21643010, PubMed:27217144).</text>
</comment>
<comment type="domain">
    <text evidence="1">The microtubule tip localization signal (MtLS) motif; mediates interaction with MAPRE1 and targeting to the growing microtubule plus ends.</text>
</comment>
<comment type="domain">
    <text evidence="24">The basic region (residues 2167-2674) mediates the association with both microtubule and actin proteins and promotes the bundling of F-actin.</text>
</comment>
<comment type="PTM">
    <text evidence="24">Phosphorylated; phosphorylation enhances the F-actin bundling activity (PubMed:17293347). Phosphorylated by GSK3B.</text>
</comment>
<comment type="PTM">
    <text evidence="18 26">Ubiquitinated, leading to its degradation by the proteasome. Ubiquitination is facilitated by Axin. Deubiquitinated by ZRANB1/TRABID.</text>
</comment>
<comment type="disease" evidence="6 13 14 15 16 20 34 39 43 44 45 46 51">
    <disease id="DI-01547">
        <name>Familial adenomatous polyposis 1</name>
        <acronym>FAP1</acronym>
        <description>An autosomal dominant cancer predisposition syndrome characterized by adenomatous polyps of the colon and rectum, but also of upper gastrointestinal tract (ampullary, duodenal and gastric adenomas). This is a viciously premalignant disease with one or more polyps progressing through dysplasia to malignancy in untreated gene carriers with a median age at diagnosis of 40 years.</description>
        <dbReference type="MIM" id="175100"/>
    </disease>
    <text>The disease is caused by variants affecting the gene represented in this entry.</text>
</comment>
<comment type="disease" evidence="8 50">
    <disease id="DI-01711">
        <name>Desmoid disease, hereditary</name>
        <acronym>DESMD</acronym>
        <description>An autosomal dominant disease characterized by multifocal fibromatosis of the abdominal wall and mesentery. Desmoid tumors can also affect paraspinal muscles, breast, occiput, arms, and lower ribs.</description>
        <dbReference type="MIM" id="135290"/>
    </disease>
    <text>The disease is caused by variants affecting the gene represented in this entry.</text>
</comment>
<comment type="disease" evidence="7 41">
    <disease id="DI-01958">
        <name>Medulloblastoma</name>
        <acronym>MDB</acronym>
        <description>Malignant, invasive embryonal tumor of the cerebellum with a preferential manifestation in children.</description>
        <dbReference type="MIM" id="155255"/>
    </disease>
    <text>The gene represented in this entry may be involved in disease pathogenesis.</text>
</comment>
<comment type="disease">
    <disease id="DI-02971">
        <name>Gastric cancer</name>
        <acronym>GASC</acronym>
        <description>A malignant disease which starts in the stomach, can spread to the esophagus or the small intestine, and can extend through the stomach wall to nearby lymph nodes and organs. It also can metastasize to other parts of the body. The term gastric cancer or gastric carcinoma refers to adenocarcinoma of the stomach that accounts for most of all gastric malignant tumors. Two main histologic types are recognized, diffuse type and intestinal type carcinomas. Diffuse tumors are poorly differentiated infiltrating lesions, resulting in thickening of the stomach. In contrast, intestinal tumors are usually exophytic, often ulcerating, and associated with intestinal metaplasia of the stomach, most often observed in sporadic disease.</description>
        <dbReference type="MIM" id="613659"/>
    </disease>
    <text>The gene represented in this entry may be involved in disease pathogenesis.</text>
</comment>
<comment type="disease">
    <disease id="DI-01708">
        <name>Hepatocellular carcinoma</name>
        <acronym>HCC</acronym>
        <description>A primary malignant neoplasm of epithelial liver cells. The major risk factors for HCC are chronic hepatitis B virus (HBV) infection, chronic hepatitis C virus (HCV) infection, prolonged dietary aflatoxin exposure, alcoholic cirrhosis, and cirrhosis due to other causes.</description>
        <dbReference type="MIM" id="114550"/>
    </disease>
    <text>The gene represented in this entry may be involved in disease pathogenesis.</text>
</comment>
<comment type="disease" evidence="38 40 42">
    <disease id="DI-06046">
        <name>Gastric adenocarcinoma and proximal polyposis of the stomach</name>
        <acronym>GAPPS</acronym>
        <description>A familial gastric polyposis syndrome characterized by autosomal dominant transmission of fundic gland polyposis with occasional hyperplastic and adenomatous polyps, sparing of the gastric antrum, and a significant risk of intestinal-type gastric adenocarcinoma development. Colorectal polyposis is not observed, and family history does not include colorectal cancer.</description>
        <dbReference type="MIM" id="619182"/>
    </disease>
    <text>The gene represented in this entry may be involved in disease pathogenesis.</text>
</comment>
<comment type="miscellaneous">
    <text>APC mutations have led to some interesting observations. (1) the great majority of the mutations found to date would result in truncation of the APC product. (2) almost all the mutations have occurred within the first half of the coding sequence, and somatic mutations in colorectal tumors are further clustered in a particular region, called MCR (mutation cluster region). (3) most identified point mutations in the APC gene are transitions from cytosine to other nucleotides. (4) the location of germline mutations tends to correlate with the number of colorectal polyps in FAP1 patients. Inactivation of both alleles of the APC gene seems to be required as an early event to develop most adenomas and carcinomas in the colon and rectum as well as some of those in the stomach.</text>
</comment>
<comment type="miscellaneous">
    <molecule>Isoform 1B</molecule>
    <text evidence="28">Produced by alternative promoter usage.</text>
</comment>
<comment type="similarity">
    <text evidence="62">Belongs to the adenomatous polyposis coli (APC) family.</text>
</comment>
<comment type="online information" name="Colon cancer gene variant databases Adenomatous Polyposis Coli (APC)">
    <link uri="https://databases.lovd.nl/shared/genes/APC"/>
    <text>Leiden Open Variation Database (LOVD)</text>
</comment>
<comment type="online information" name="Atlas of Genetics and Cytogenetics in Oncology and Haematology">
    <link uri="https://atlasgeneticsoncology.org/gene/118/APC"/>
</comment>
<organism>
    <name type="scientific">Homo sapiens</name>
    <name type="common">Human</name>
    <dbReference type="NCBI Taxonomy" id="9606"/>
    <lineage>
        <taxon>Eukaryota</taxon>
        <taxon>Metazoa</taxon>
        <taxon>Chordata</taxon>
        <taxon>Craniata</taxon>
        <taxon>Vertebrata</taxon>
        <taxon>Euteleostomi</taxon>
        <taxon>Mammalia</taxon>
        <taxon>Eutheria</taxon>
        <taxon>Euarchontoglires</taxon>
        <taxon>Primates</taxon>
        <taxon>Haplorrhini</taxon>
        <taxon>Catarrhini</taxon>
        <taxon>Hominidae</taxon>
        <taxon>Homo</taxon>
    </lineage>
</organism>